<feature type="chain" id="PRO_0000053461" description="Retinoic acid receptor alpha">
    <location>
        <begin position="1"/>
        <end position="462"/>
    </location>
</feature>
<feature type="domain" description="NR LBD" evidence="4">
    <location>
        <begin position="183"/>
        <end position="417"/>
    </location>
</feature>
<feature type="DNA-binding region" description="Nuclear receptor" evidence="3">
    <location>
        <begin position="88"/>
        <end position="153"/>
    </location>
</feature>
<feature type="zinc finger region" description="NR C4-type" evidence="3">
    <location>
        <begin position="88"/>
        <end position="108"/>
    </location>
</feature>
<feature type="zinc finger region" description="NR C4-type" evidence="3">
    <location>
        <begin position="124"/>
        <end position="148"/>
    </location>
</feature>
<feature type="region of interest" description="Modulating">
    <location>
        <begin position="1"/>
        <end position="87"/>
    </location>
</feature>
<feature type="region of interest" description="Disordered" evidence="5">
    <location>
        <begin position="52"/>
        <end position="77"/>
    </location>
</feature>
<feature type="region of interest" description="Hinge">
    <location>
        <begin position="154"/>
        <end position="182"/>
    </location>
</feature>
<feature type="region of interest" description="Required for binding corepressor NCOR1">
    <location>
        <begin position="404"/>
        <end position="419"/>
    </location>
</feature>
<feature type="region of interest" description="Disordered" evidence="5">
    <location>
        <begin position="419"/>
        <end position="462"/>
    </location>
</feature>
<feature type="short sequence motif" description="UBR5-degron" evidence="30">
    <location>
        <begin position="254"/>
        <end position="258"/>
    </location>
</feature>
<feature type="short sequence motif" description="9aaTAD" evidence="29">
    <location>
        <begin position="408"/>
        <end position="416"/>
    </location>
</feature>
<feature type="compositionally biased region" description="Polar residues" evidence="5">
    <location>
        <begin position="52"/>
        <end position="64"/>
    </location>
</feature>
<feature type="compositionally biased region" description="Gly residues" evidence="5">
    <location>
        <begin position="426"/>
        <end position="437"/>
    </location>
</feature>
<feature type="compositionally biased region" description="Low complexity" evidence="5">
    <location>
        <begin position="444"/>
        <end position="462"/>
    </location>
</feature>
<feature type="binding site" evidence="38">
    <location>
        <position position="235"/>
    </location>
    <ligand>
        <name>all-trans-retinoate</name>
        <dbReference type="ChEBI" id="CHEBI:35291"/>
    </ligand>
</feature>
<feature type="binding site" evidence="38">
    <location>
        <position position="287"/>
    </location>
    <ligand>
        <name>all-trans-retinoate</name>
        <dbReference type="ChEBI" id="CHEBI:35291"/>
    </ligand>
</feature>
<feature type="site" description="Breakpoint for translocation to form PLZF-RAR-alpha, RAR-alpha1-PLZF and PML-RAR-alpha oncogenes">
    <location>
        <begin position="60"/>
        <end position="61"/>
    </location>
</feature>
<feature type="modified residue" description="Phosphoserine; by CDK7" evidence="2">
    <location>
        <position position="77"/>
    </location>
</feature>
<feature type="modified residue" description="Phosphoserine; by PKB/AKT1" evidence="15">
    <location>
        <position position="96"/>
    </location>
</feature>
<feature type="modified residue" description="Phosphoserine; by PKA" evidence="22">
    <location>
        <position position="219"/>
    </location>
</feature>
<feature type="modified residue" description="Phosphoserine; by PKA" evidence="22">
    <location>
        <position position="369"/>
    </location>
</feature>
<feature type="cross-link" description="Glycyl lysine isopeptide (Lys-Gly) (interchain with G-Cter in SUMO)" evidence="20">
    <location>
        <position position="166"/>
    </location>
</feature>
<feature type="cross-link" description="Glycyl lysine isopeptide (Lys-Gly) (interchain with G-Cter in SUMO)" evidence="20">
    <location>
        <position position="171"/>
    </location>
</feature>
<feature type="cross-link" description="Glycyl lysine isopeptide (Lys-Gly) (interchain with G-Cter in SUMO)" evidence="20">
    <location>
        <position position="399"/>
    </location>
</feature>
<feature type="splice variant" id="VSP_003629" description="In isoform Alpha-2." evidence="35">
    <original>MASNSSSCPTPGGGHLNGYPVPPYAFFFPPMLGGLSPPGALTTLQHQLPVSGYSTPSPAT</original>
    <variation>MYESVEVGGPTPNPFLVVDFYNQNRACLLPEKGLPAPGPYSTPLRTPLWNGSNHS</variation>
    <location>
        <begin position="1"/>
        <end position="60"/>
    </location>
</feature>
<feature type="splice variant" id="VSP_043143" description="In isoform Alpha-1-deltaBC." evidence="34">
    <location>
        <begin position="61"/>
        <end position="157"/>
    </location>
</feature>
<feature type="mutagenesis site" description="No effect on PKB/AKT1-mediated phosphorylation. Repressed transactivation." evidence="15">
    <original>S</original>
    <variation>A</variation>
    <location>
        <position position="95"/>
    </location>
</feature>
<feature type="mutagenesis site" description="Abolishes PKB/AKT1-mediated phosphorylation. Repressed transactivation." evidence="15">
    <original>S</original>
    <variation>A</variation>
    <location>
        <position position="96"/>
    </location>
</feature>
<feature type="mutagenesis site" description="Abrogates sumoylation in the presence or absence of ATRA and primarily nuclear localization and enhanced ATRA-mediated transcriptional activity; when associated with R-166; R-171 and R-399." evidence="20">
    <original>K</original>
    <variation>R</variation>
    <location>
        <position position="147"/>
    </location>
</feature>
<feature type="mutagenesis site" description="No effect on PKB/AKT1-mediated phosphorylation. No repression of transactivation." evidence="15">
    <original>S</original>
    <variation>A</variation>
    <location>
        <position position="154"/>
    </location>
</feature>
<feature type="mutagenesis site" description="No effect on PKB/AKT1-mediated phosphorylation. Repressed transactivation." evidence="15">
    <original>S</original>
    <variation>A</variation>
    <location>
        <position position="157"/>
    </location>
</feature>
<feature type="mutagenesis site" description="Cytoplasmic in the absence of ATRA and reduced transcriptional activity in the presence of ATRA. Low sumoylation levels in the presence of ATRA; when associated with R-399. Nuclear localization and enhanced transcriptional activity; when associated with R-171 and R-399. Primarily nuclear localization and enhanced ATRA-mediated transcriptional activity; when associated with R-147; R-171 and R-399." evidence="20">
    <original>K</original>
    <variation>R</variation>
    <location>
        <position position="166"/>
    </location>
</feature>
<feature type="mutagenesis site" description="Cytoplasmic in the absence of ATRA and reduced transcriptional activity in the presence of ATRA. Low sumoylation levels in the presence of ATRA; when associated with R-399. Nuclear localization and enhanced transcriptional activity; when associated with R-166 and R-399. Primarily nuclear localization and enhanced ATRA-mediated transcriptional activity; when associated with R-147; R-166 and R-399." evidence="20">
    <original>K</original>
    <variation>R</variation>
    <location>
        <position position="171"/>
    </location>
</feature>
<feature type="mutagenesis site" description="No effect on heterodimerization with RARA. On ATRA treatment, localizes to the nucleus, and increased protein levels; when associated with A-369." evidence="22">
    <original>S</original>
    <variation>A</variation>
    <location>
        <position position="219"/>
    </location>
</feature>
<feature type="mutagenesis site" description="No effect on heterodimerization with RARA. On ATRA treatment, localizes to both nucleus and cytoplasm, no increase in protein levels, and decrease in RARA-mediated transcriptional activity; when associated with E-369." evidence="22">
    <original>S</original>
    <variation>E</variation>
    <location>
        <position position="219"/>
    </location>
</feature>
<feature type="mutagenesis site" description="Abolished ubiquitination and degradation by UBR5." evidence="30">
    <original>V</original>
    <variation>A</variation>
    <location>
        <position position="240"/>
    </location>
</feature>
<feature type="mutagenesis site" description="Reduced ubiquitination and degradation by UBR5." evidence="30">
    <original>I</original>
    <variation>A</variation>
    <location>
        <position position="254"/>
    </location>
</feature>
<feature type="mutagenesis site" description="Reduced ubiquitination and degradation by UBR5." evidence="30">
    <original>I</original>
    <variation>A</variation>
    <location>
        <position position="258"/>
    </location>
</feature>
<feature type="mutagenesis site" description="No effect on heterodimerization with RARA. On ATRA treatment, localizes to the nucleus, and increased protein levels; when associated with A-219." evidence="22">
    <original>S</original>
    <variation>A</variation>
    <location>
        <position position="369"/>
    </location>
</feature>
<feature type="mutagenesis site" description="Some inhibition of heterodimerization with RARA. On ATRA treatment, localizes to both nucleus and cytoplasm, increase in protein levels, and decrease in RARA-mediated transcriptional activity; when associated with E-219." evidence="22">
    <original>S</original>
    <variation>E</variation>
    <location>
        <position position="369"/>
    </location>
</feature>
<feature type="mutagenesis site" description="Abrogates interaction with NCOR1 or NCOR2. Increased affinity for NCOR1 and NCOR2 in the presence of BMS493. Increased transcriptional activity in the presence of agonist and decreased activity in the presence of neutral antagonist." evidence="23">
    <original>I</original>
    <variation>E</variation>
    <location>
        <position position="396"/>
    </location>
</feature>
<feature type="mutagenesis site" description="In the absence of ATRA, abolishes sumoylation and is mainly nuclear. In the presence of ATRA, some sumoylation, cytoplasmic location, reduced transcriptional activity and no SENP6 binding. Low sumoylation levels in the presence of ATRA and nuclear location in the absence of ATRA; when associated with R-166 or with R-171. Primarily nuclear localization and enhanced ATRA-mediated transcriptional activity; when associated with R-147; R-166 and R-171." evidence="20">
    <original>K</original>
    <variation>R</variation>
    <location>
        <position position="399"/>
    </location>
</feature>
<feature type="mutagenesis site" description="Abolishes interaction with ASXL1 and NCOA1." evidence="16">
    <original>LI</original>
    <variation>AA</variation>
    <location>
        <begin position="409"/>
        <end position="410"/>
    </location>
</feature>
<feature type="mutagenesis site" description="Impairs interaction with ASXL1 and NCOA1; when associated with Q-415." evidence="16">
    <original>E</original>
    <variation>Q</variation>
    <location>
        <position position="412"/>
    </location>
</feature>
<feature type="mutagenesis site" description="Abolishes interaction with ASXL1 and NCOA1." evidence="16">
    <original>ML</original>
    <variation>AA</variation>
    <location>
        <begin position="413"/>
        <end position="414"/>
    </location>
</feature>
<feature type="mutagenesis site" description="Impairs interaction with ASXL1 and NCOA1; when associated with Q-412." evidence="16">
    <original>E</original>
    <variation>Q</variation>
    <location>
        <position position="415"/>
    </location>
</feature>
<feature type="sequence conflict" description="In Ref. 3; AAD05222." evidence="36" ref="3">
    <original>E</original>
    <variation>D</variation>
    <location>
        <position position="241"/>
    </location>
</feature>
<feature type="turn" evidence="39">
    <location>
        <begin position="89"/>
        <end position="91"/>
    </location>
</feature>
<feature type="strand" evidence="39">
    <location>
        <begin position="97"/>
        <end position="99"/>
    </location>
</feature>
<feature type="strand" evidence="42">
    <location>
        <begin position="102"/>
        <end position="104"/>
    </location>
</feature>
<feature type="helix" evidence="39">
    <location>
        <begin position="106"/>
        <end position="117"/>
    </location>
</feature>
<feature type="turn" evidence="39">
    <location>
        <begin position="134"/>
        <end position="136"/>
    </location>
</feature>
<feature type="helix" evidence="39">
    <location>
        <begin position="137"/>
        <end position="139"/>
    </location>
</feature>
<feature type="helix" evidence="39">
    <location>
        <begin position="141"/>
        <end position="150"/>
    </location>
</feature>
<feature type="helix" evidence="39">
    <location>
        <begin position="155"/>
        <end position="157"/>
    </location>
</feature>
<feature type="helix" evidence="40">
    <location>
        <begin position="183"/>
        <end position="196"/>
    </location>
</feature>
<feature type="helix" evidence="40">
    <location>
        <begin position="202"/>
        <end position="204"/>
    </location>
</feature>
<feature type="strand" evidence="41">
    <location>
        <begin position="214"/>
        <end position="216"/>
    </location>
</feature>
<feature type="helix" evidence="40">
    <location>
        <begin position="222"/>
        <end position="244"/>
    </location>
</feature>
<feature type="helix" evidence="40">
    <location>
        <begin position="249"/>
        <end position="251"/>
    </location>
</feature>
<feature type="helix" evidence="40">
    <location>
        <begin position="254"/>
        <end position="275"/>
    </location>
</feature>
<feature type="turn" evidence="40">
    <location>
        <begin position="279"/>
        <end position="282"/>
    </location>
</feature>
<feature type="strand" evidence="40">
    <location>
        <begin position="283"/>
        <end position="285"/>
    </location>
</feature>
<feature type="strand" evidence="40">
    <location>
        <begin position="289"/>
        <end position="293"/>
    </location>
</feature>
<feature type="helix" evidence="40">
    <location>
        <begin position="294"/>
        <end position="300"/>
    </location>
</feature>
<feature type="helix" evidence="40">
    <location>
        <begin position="303"/>
        <end position="305"/>
    </location>
</feature>
<feature type="helix" evidence="40">
    <location>
        <begin position="306"/>
        <end position="316"/>
    </location>
</feature>
<feature type="helix" evidence="40">
    <location>
        <begin position="317"/>
        <end position="319"/>
    </location>
</feature>
<feature type="helix" evidence="40">
    <location>
        <begin position="323"/>
        <end position="334"/>
    </location>
</feature>
<feature type="helix" evidence="40">
    <location>
        <begin position="345"/>
        <end position="366"/>
    </location>
</feature>
<feature type="helix" evidence="40">
    <location>
        <begin position="373"/>
        <end position="401"/>
    </location>
</feature>
<feature type="strand" evidence="40">
    <location>
        <begin position="402"/>
        <end position="404"/>
    </location>
</feature>
<feature type="helix" evidence="40">
    <location>
        <begin position="408"/>
        <end position="414"/>
    </location>
</feature>
<proteinExistence type="evidence at protein level"/>
<gene>
    <name type="primary">RARA</name>
    <name type="synonym">NR1B1</name>
</gene>
<sequence length="462" mass="50771">MASNSSSCPTPGGGHLNGYPVPPYAFFFPPMLGGLSPPGALTTLQHQLPVSGYSTPSPATIETQSSSSEEIVPSPPSPPPLPRIYKPCFVCQDKSSGYHYGVSACEGCKGFFRRSIQKNMVYTCHRDKNCIINKVTRNRCQYCRLQKCFEVGMSKESVRNDRNKKKKEVPKPECSESYTLTPEVGELIEKVRKAHQETFPALCQLGKYTTNNSSEQRVSLDIDLWDKFSELSTKCIIKTVEFAKQLPGFTTLTIADQITLLKAACLDILILRICTRYTPEQDTMTFSDGLTLNRTQMHNAGFGPLTDLVFAFANQLLPLEMDDAETGLLSAICLICGDRQDLEQPDRVDMLQEPLLEALKVYVRKRRPSRPHMFPKMLMKITDLRSISAKGAERVITLKMEIPGSMPPLIQEMLENSEGLDTLSGQPGGGGRDGGGLAPPPGSCSPSLSPSSNRSSPATHSP</sequence>
<dbReference type="EMBL" id="X06614">
    <property type="protein sequence ID" value="CAA29829.1"/>
    <property type="molecule type" value="mRNA"/>
</dbReference>
<dbReference type="EMBL" id="X06538">
    <property type="protein sequence ID" value="CAA29787.1"/>
    <property type="molecule type" value="mRNA"/>
</dbReference>
<dbReference type="EMBL" id="AF088895">
    <property type="protein sequence ID" value="AAD05222.1"/>
    <property type="molecule type" value="Genomic_DNA"/>
</dbReference>
<dbReference type="EMBL" id="AF088889">
    <property type="protein sequence ID" value="AAD05222.1"/>
    <property type="status" value="JOINED"/>
    <property type="molecule type" value="Genomic_DNA"/>
</dbReference>
<dbReference type="EMBL" id="AF088890">
    <property type="protein sequence ID" value="AAD05222.1"/>
    <property type="status" value="JOINED"/>
    <property type="molecule type" value="Genomic_DNA"/>
</dbReference>
<dbReference type="EMBL" id="AF088891">
    <property type="protein sequence ID" value="AAD05222.1"/>
    <property type="status" value="JOINED"/>
    <property type="molecule type" value="Genomic_DNA"/>
</dbReference>
<dbReference type="EMBL" id="AF088892">
    <property type="protein sequence ID" value="AAD05222.1"/>
    <property type="status" value="JOINED"/>
    <property type="molecule type" value="Genomic_DNA"/>
</dbReference>
<dbReference type="EMBL" id="AF088893">
    <property type="protein sequence ID" value="AAD05222.1"/>
    <property type="status" value="JOINED"/>
    <property type="molecule type" value="Genomic_DNA"/>
</dbReference>
<dbReference type="EMBL" id="AF088894">
    <property type="protein sequence ID" value="AAD05222.1"/>
    <property type="status" value="JOINED"/>
    <property type="molecule type" value="Genomic_DNA"/>
</dbReference>
<dbReference type="EMBL" id="FJ487576">
    <property type="protein sequence ID" value="ACK86665.1"/>
    <property type="molecule type" value="mRNA"/>
</dbReference>
<dbReference type="EMBL" id="AC080112">
    <property type="status" value="NOT_ANNOTATED_CDS"/>
    <property type="molecule type" value="Genomic_DNA"/>
</dbReference>
<dbReference type="EMBL" id="BC008727">
    <property type="protein sequence ID" value="AAH08727.1"/>
    <property type="molecule type" value="mRNA"/>
</dbReference>
<dbReference type="EMBL" id="BC071733">
    <property type="protein sequence ID" value="AAH71733.1"/>
    <property type="molecule type" value="mRNA"/>
</dbReference>
<dbReference type="EMBL" id="X56058">
    <property type="protein sequence ID" value="CAA39533.1"/>
    <property type="molecule type" value="Genomic_DNA"/>
</dbReference>
<dbReference type="EMBL" id="X58685">
    <property type="protein sequence ID" value="CAA39533.1"/>
    <property type="status" value="JOINED"/>
    <property type="molecule type" value="mRNA"/>
</dbReference>
<dbReference type="EMBL" id="X58685">
    <property type="protein sequence ID" value="CAA41532.1"/>
    <property type="molecule type" value="mRNA"/>
</dbReference>
<dbReference type="EMBL" id="U41742">
    <property type="protein sequence ID" value="AAB00112.1"/>
    <property type="status" value="ALT_INIT"/>
    <property type="molecule type" value="mRNA"/>
</dbReference>
<dbReference type="EMBL" id="U41743">
    <property type="protein sequence ID" value="AAB00113.1"/>
    <property type="status" value="ALT_INIT"/>
    <property type="molecule type" value="mRNA"/>
</dbReference>
<dbReference type="EMBL" id="AF283809">
    <property type="protein sequence ID" value="AAF87249.1"/>
    <property type="molecule type" value="Genomic_DNA"/>
</dbReference>
<dbReference type="EMBL" id="AB067754">
    <property type="protein sequence ID" value="BAB62809.1"/>
    <property type="status" value="ALT_INIT"/>
    <property type="molecule type" value="mRNA"/>
</dbReference>
<dbReference type="CCDS" id="CCDS11366.1">
    <molecule id="P10276-1"/>
</dbReference>
<dbReference type="CCDS" id="CCDS42317.1">
    <molecule id="P10276-2"/>
</dbReference>
<dbReference type="CCDS" id="CCDS45671.1">
    <molecule id="P10276-3"/>
</dbReference>
<dbReference type="PIR" id="A29491">
    <property type="entry name" value="A29491"/>
</dbReference>
<dbReference type="RefSeq" id="NP_000955.1">
    <molecule id="P10276-1"/>
    <property type="nucleotide sequence ID" value="NM_000964.4"/>
</dbReference>
<dbReference type="RefSeq" id="NP_001019980.1">
    <molecule id="P10276-2"/>
    <property type="nucleotide sequence ID" value="NM_001024809.4"/>
</dbReference>
<dbReference type="RefSeq" id="NP_001138773.1">
    <molecule id="P10276-1"/>
    <property type="nucleotide sequence ID" value="NM_001145301.3"/>
</dbReference>
<dbReference type="RefSeq" id="NP_001138774.1">
    <molecule id="P10276-3"/>
    <property type="nucleotide sequence ID" value="NM_001145302.3"/>
</dbReference>
<dbReference type="RefSeq" id="XP_005257610.1">
    <molecule id="P10276-1"/>
    <property type="nucleotide sequence ID" value="XM_005257553.2"/>
</dbReference>
<dbReference type="RefSeq" id="XP_005257611.1">
    <molecule id="P10276-1"/>
    <property type="nucleotide sequence ID" value="XM_005257554.2"/>
</dbReference>
<dbReference type="RefSeq" id="XP_011523397.1">
    <molecule id="P10276-1"/>
    <property type="nucleotide sequence ID" value="XM_011525095.2"/>
</dbReference>
<dbReference type="RefSeq" id="XP_047292462.1">
    <molecule id="P10276-1"/>
    <property type="nucleotide sequence ID" value="XM_047436506.1"/>
</dbReference>
<dbReference type="RefSeq" id="XP_047292463.1">
    <molecule id="P10276-1"/>
    <property type="nucleotide sequence ID" value="XM_047436507.1"/>
</dbReference>
<dbReference type="RefSeq" id="XP_047292464.1">
    <molecule id="P10276-1"/>
    <property type="nucleotide sequence ID" value="XM_047436508.1"/>
</dbReference>
<dbReference type="RefSeq" id="XP_054172813.1">
    <molecule id="P10276-1"/>
    <property type="nucleotide sequence ID" value="XM_054316838.1"/>
</dbReference>
<dbReference type="RefSeq" id="XP_054172814.1">
    <molecule id="P10276-1"/>
    <property type="nucleotide sequence ID" value="XM_054316839.1"/>
</dbReference>
<dbReference type="RefSeq" id="XP_054172815.1">
    <molecule id="P10276-1"/>
    <property type="nucleotide sequence ID" value="XM_054316840.1"/>
</dbReference>
<dbReference type="RefSeq" id="XP_054172816.1">
    <molecule id="P10276-1"/>
    <property type="nucleotide sequence ID" value="XM_054316841.1"/>
</dbReference>
<dbReference type="PDB" id="1DKF">
    <property type="method" value="X-ray"/>
    <property type="resolution" value="2.50 A"/>
    <property type="chains" value="B=182-416"/>
</dbReference>
<dbReference type="PDB" id="1DSZ">
    <property type="method" value="X-ray"/>
    <property type="resolution" value="1.70 A"/>
    <property type="chains" value="A=82-167"/>
</dbReference>
<dbReference type="PDB" id="3A9E">
    <property type="method" value="X-ray"/>
    <property type="resolution" value="2.75 A"/>
    <property type="chains" value="B=153-421"/>
</dbReference>
<dbReference type="PDB" id="3KMR">
    <property type="method" value="X-ray"/>
    <property type="resolution" value="1.80 A"/>
    <property type="chains" value="A=176-421"/>
</dbReference>
<dbReference type="PDB" id="3KMZ">
    <property type="method" value="X-ray"/>
    <property type="resolution" value="2.10 A"/>
    <property type="chains" value="A/B=176-421"/>
</dbReference>
<dbReference type="PDB" id="4DQM">
    <property type="method" value="X-ray"/>
    <property type="resolution" value="2.75 A"/>
    <property type="chains" value="A/C=182-415"/>
</dbReference>
<dbReference type="PDB" id="5K13">
    <property type="method" value="X-ray"/>
    <property type="resolution" value="1.85 A"/>
    <property type="chains" value="A=181-426"/>
</dbReference>
<dbReference type="PDB" id="6XWG">
    <property type="method" value="X-ray"/>
    <property type="resolution" value="2.40 A"/>
    <property type="chains" value="D=82-167"/>
</dbReference>
<dbReference type="PDB" id="7AOS">
    <property type="method" value="X-ray"/>
    <property type="resolution" value="2.55 A"/>
    <property type="chains" value="B=176-421"/>
</dbReference>
<dbReference type="PDB" id="7APO">
    <property type="method" value="X-ray"/>
    <property type="resolution" value="2.40 A"/>
    <property type="chains" value="A/B=176-421"/>
</dbReference>
<dbReference type="PDB" id="7QAA">
    <property type="method" value="X-ray"/>
    <property type="resolution" value="2.76 A"/>
    <property type="chains" value="B=182-416"/>
</dbReference>
<dbReference type="PDB" id="7WQQ">
    <property type="method" value="X-ray"/>
    <property type="resolution" value="1.90 A"/>
    <property type="chains" value="A=176-421"/>
</dbReference>
<dbReference type="PDB" id="9GFE">
    <property type="method" value="X-ray"/>
    <property type="resolution" value="1.58 A"/>
    <property type="chains" value="A=181-415"/>
</dbReference>
<dbReference type="PDB" id="9GFI">
    <property type="method" value="X-ray"/>
    <property type="resolution" value="2.10 A"/>
    <property type="chains" value="A=180-415"/>
</dbReference>
<dbReference type="PDBsum" id="1DKF"/>
<dbReference type="PDBsum" id="1DSZ"/>
<dbReference type="PDBsum" id="3A9E"/>
<dbReference type="PDBsum" id="3KMR"/>
<dbReference type="PDBsum" id="3KMZ"/>
<dbReference type="PDBsum" id="4DQM"/>
<dbReference type="PDBsum" id="5K13"/>
<dbReference type="PDBsum" id="6XWG"/>
<dbReference type="PDBsum" id="7AOS"/>
<dbReference type="PDBsum" id="7APO"/>
<dbReference type="PDBsum" id="7QAA"/>
<dbReference type="PDBsum" id="7WQQ"/>
<dbReference type="PDBsum" id="9GFE"/>
<dbReference type="PDBsum" id="9GFI"/>
<dbReference type="EMDB" id="EMD-17542"/>
<dbReference type="SASBDB" id="P10276"/>
<dbReference type="SMR" id="P10276"/>
<dbReference type="BioGRID" id="111849">
    <property type="interactions" value="166"/>
</dbReference>
<dbReference type="ComplexPortal" id="CPX-508">
    <property type="entry name" value="RXRalpha-RARalpha retinoic acid receptor complex"/>
</dbReference>
<dbReference type="ComplexPortal" id="CPX-525">
    <property type="entry name" value="RARalpha-NCOA1 activated retinoic acid receptor complex"/>
</dbReference>
<dbReference type="ComplexPortal" id="CPX-666">
    <property type="entry name" value="RARalpha-NCOA2 activated retinoic acid receptor complex"/>
</dbReference>
<dbReference type="ComplexPortal" id="CPX-816">
    <property type="entry name" value="RXRalpha-RARalpha-NCOA2 retinoic acid receptor complex"/>
</dbReference>
<dbReference type="CORUM" id="P10276"/>
<dbReference type="DIP" id="DIP-34N"/>
<dbReference type="FunCoup" id="P10276">
    <property type="interactions" value="1003"/>
</dbReference>
<dbReference type="IntAct" id="P10276">
    <property type="interactions" value="74"/>
</dbReference>
<dbReference type="MINT" id="P10276"/>
<dbReference type="STRING" id="9606.ENSP00000254066"/>
<dbReference type="BindingDB" id="P10276"/>
<dbReference type="ChEMBL" id="CHEMBL2055"/>
<dbReference type="DrugBank" id="DB00459">
    <property type="generic name" value="Acitretin"/>
</dbReference>
<dbReference type="DrugBank" id="DB00210">
    <property type="generic name" value="Adapalene"/>
</dbReference>
<dbReference type="DrugBank" id="DB00523">
    <property type="generic name" value="Alitretinoin"/>
</dbReference>
<dbReference type="DrugBank" id="DB00926">
    <property type="generic name" value="Etretinate"/>
</dbReference>
<dbReference type="DrugBank" id="DB05653">
    <property type="generic name" value="IRX-5183"/>
</dbReference>
<dbReference type="DrugBank" id="DB00982">
    <property type="generic name" value="Isotretinoin"/>
</dbReference>
<dbReference type="DrugBank" id="DB01941">
    <property type="generic name" value="LG-100268"/>
</dbReference>
<dbReference type="DrugBank" id="DB05785">
    <property type="generic name" value="LGD-1550"/>
</dbReference>
<dbReference type="DrugBank" id="DB04942">
    <property type="generic name" value="Tamibarotene"/>
</dbReference>
<dbReference type="DrugBank" id="DB00799">
    <property type="generic name" value="Tazarotene"/>
</dbReference>
<dbReference type="DrugBank" id="DB00755">
    <property type="generic name" value="Tretinoin"/>
</dbReference>
<dbReference type="DrugBank" id="DB12808">
    <property type="generic name" value="Trifarotene"/>
</dbReference>
<dbReference type="DrugCentral" id="P10276"/>
<dbReference type="GuidetoPHARMACOLOGY" id="590"/>
<dbReference type="MoonDB" id="P10276">
    <property type="type" value="Predicted"/>
</dbReference>
<dbReference type="GlyGen" id="P10276">
    <property type="glycosylation" value="2 sites"/>
</dbReference>
<dbReference type="iPTMnet" id="P10276"/>
<dbReference type="PhosphoSitePlus" id="P10276"/>
<dbReference type="SwissPalm" id="P10276"/>
<dbReference type="BioMuta" id="RARA"/>
<dbReference type="DMDM" id="133483"/>
<dbReference type="jPOST" id="P10276"/>
<dbReference type="MassIVE" id="P10276"/>
<dbReference type="PaxDb" id="9606-ENSP00000254066"/>
<dbReference type="PeptideAtlas" id="P10276"/>
<dbReference type="ProteomicsDB" id="52592">
    <molecule id="P10276-1"/>
</dbReference>
<dbReference type="ProteomicsDB" id="52593">
    <molecule id="P10276-2"/>
</dbReference>
<dbReference type="ProteomicsDB" id="52594">
    <molecule id="P10276-3"/>
</dbReference>
<dbReference type="Antibodypedia" id="16473">
    <property type="antibodies" value="839 antibodies from 46 providers"/>
</dbReference>
<dbReference type="DNASU" id="5914"/>
<dbReference type="Ensembl" id="ENST00000254066.10">
    <molecule id="P10276-1"/>
    <property type="protein sequence ID" value="ENSP00000254066.5"/>
    <property type="gene ID" value="ENSG00000131759.18"/>
</dbReference>
<dbReference type="Ensembl" id="ENST00000394081.7">
    <molecule id="P10276-2"/>
    <property type="protein sequence ID" value="ENSP00000377643.3"/>
    <property type="gene ID" value="ENSG00000131759.18"/>
</dbReference>
<dbReference type="Ensembl" id="ENST00000394089.6">
    <molecule id="P10276-1"/>
    <property type="protein sequence ID" value="ENSP00000377649.2"/>
    <property type="gene ID" value="ENSG00000131759.18"/>
</dbReference>
<dbReference type="Ensembl" id="ENST00000425707.7">
    <molecule id="P10276-3"/>
    <property type="protein sequence ID" value="ENSP00000389993.3"/>
    <property type="gene ID" value="ENSG00000131759.18"/>
</dbReference>
<dbReference type="GeneID" id="5914"/>
<dbReference type="KEGG" id="hsa:5914"/>
<dbReference type="MANE-Select" id="ENST00000254066.10">
    <property type="protein sequence ID" value="ENSP00000254066.5"/>
    <property type="RefSeq nucleotide sequence ID" value="NM_000964.4"/>
    <property type="RefSeq protein sequence ID" value="NP_000955.1"/>
</dbReference>
<dbReference type="UCSC" id="uc002hun.3">
    <molecule id="P10276-1"/>
    <property type="organism name" value="human"/>
</dbReference>
<dbReference type="AGR" id="HGNC:9864"/>
<dbReference type="CTD" id="5914"/>
<dbReference type="DisGeNET" id="5914"/>
<dbReference type="GeneCards" id="RARA"/>
<dbReference type="HGNC" id="HGNC:9864">
    <property type="gene designation" value="RARA"/>
</dbReference>
<dbReference type="HPA" id="ENSG00000131759">
    <property type="expression patterns" value="Low tissue specificity"/>
</dbReference>
<dbReference type="MalaCards" id="RARA"/>
<dbReference type="MIM" id="180240">
    <property type="type" value="gene"/>
</dbReference>
<dbReference type="MIM" id="612376">
    <property type="type" value="phenotype"/>
</dbReference>
<dbReference type="neXtProt" id="NX_P10276"/>
<dbReference type="OpenTargets" id="ENSG00000131759"/>
<dbReference type="Orphanet" id="520">
    <property type="disease" value="Acute promyelocytic leukemia"/>
</dbReference>
<dbReference type="PharmGKB" id="PA34225"/>
<dbReference type="VEuPathDB" id="HostDB:ENSG00000131759"/>
<dbReference type="eggNOG" id="KOG3575">
    <property type="taxonomic scope" value="Eukaryota"/>
</dbReference>
<dbReference type="GeneTree" id="ENSGT00940000159997"/>
<dbReference type="HOGENOM" id="CLU_007368_18_2_1"/>
<dbReference type="InParanoid" id="P10276"/>
<dbReference type="OMA" id="CHTRAPT"/>
<dbReference type="OrthoDB" id="6081310at2759"/>
<dbReference type="PAN-GO" id="P10276">
    <property type="GO annotations" value="7 GO annotations based on evolutionary models"/>
</dbReference>
<dbReference type="PhylomeDB" id="P10276"/>
<dbReference type="TreeFam" id="TF328382"/>
<dbReference type="PathwayCommons" id="P10276"/>
<dbReference type="Reactome" id="R-HSA-383280">
    <property type="pathway name" value="Nuclear Receptor transcription pathway"/>
</dbReference>
<dbReference type="Reactome" id="R-HSA-4090294">
    <property type="pathway name" value="SUMOylation of intracellular receptors"/>
</dbReference>
<dbReference type="Reactome" id="R-HSA-5362517">
    <property type="pathway name" value="Signaling by Retinoic Acid"/>
</dbReference>
<dbReference type="Reactome" id="R-HSA-5617472">
    <property type="pathway name" value="Activation of anterior HOX genes in hindbrain development during early embryogenesis"/>
</dbReference>
<dbReference type="Reactome" id="R-HSA-9616222">
    <property type="pathway name" value="Transcriptional regulation of granulopoiesis"/>
</dbReference>
<dbReference type="Reactome" id="R-HSA-9839394">
    <property type="pathway name" value="TGFBR3 expression"/>
</dbReference>
<dbReference type="SignaLink" id="P10276"/>
<dbReference type="SIGNOR" id="P10276"/>
<dbReference type="BioGRID-ORCS" id="5914">
    <property type="hits" value="30 hits in 1195 CRISPR screens"/>
</dbReference>
<dbReference type="CD-CODE" id="1ED00101">
    <property type="entry name" value="Synthetic Condensate 000186"/>
</dbReference>
<dbReference type="CD-CODE" id="B5B9A610">
    <property type="entry name" value="PML body"/>
</dbReference>
<dbReference type="CD-CODE" id="B9AD63BA">
    <property type="entry name" value="Synthetic Condensate 000189"/>
</dbReference>
<dbReference type="ChiTaRS" id="RARA">
    <property type="organism name" value="human"/>
</dbReference>
<dbReference type="EvolutionaryTrace" id="P10276"/>
<dbReference type="GeneWiki" id="Retinoic_acid_receptor_alpha"/>
<dbReference type="GenomeRNAi" id="5914"/>
<dbReference type="Pharos" id="P10276">
    <property type="development level" value="Tclin"/>
</dbReference>
<dbReference type="PRO" id="PR:P10276"/>
<dbReference type="Proteomes" id="UP000005640">
    <property type="component" value="Chromosome 17"/>
</dbReference>
<dbReference type="RNAct" id="P10276">
    <property type="molecule type" value="protein"/>
</dbReference>
<dbReference type="Bgee" id="ENSG00000131759">
    <property type="expression patterns" value="Expressed in mammary duct and 192 other cell types or tissues"/>
</dbReference>
<dbReference type="ExpressionAtlas" id="P10276">
    <property type="expression patterns" value="baseline and differential"/>
</dbReference>
<dbReference type="GO" id="GO:0015629">
    <property type="term" value="C:actin cytoskeleton"/>
    <property type="evidence" value="ECO:0000314"/>
    <property type="project" value="HPA"/>
</dbReference>
<dbReference type="GO" id="GO:0000785">
    <property type="term" value="C:chromatin"/>
    <property type="evidence" value="ECO:0000314"/>
    <property type="project" value="BHF-UCL"/>
</dbReference>
<dbReference type="GO" id="GO:0005737">
    <property type="term" value="C:cytoplasm"/>
    <property type="evidence" value="ECO:0000314"/>
    <property type="project" value="UniProtKB"/>
</dbReference>
<dbReference type="GO" id="GO:0005829">
    <property type="term" value="C:cytosol"/>
    <property type="evidence" value="ECO:0000314"/>
    <property type="project" value="HPA"/>
</dbReference>
<dbReference type="GO" id="GO:0030425">
    <property type="term" value="C:dendrite"/>
    <property type="evidence" value="ECO:0007669"/>
    <property type="project" value="Ensembl"/>
</dbReference>
<dbReference type="GO" id="GO:0005730">
    <property type="term" value="C:nucleolus"/>
    <property type="evidence" value="ECO:0000314"/>
    <property type="project" value="HPA"/>
</dbReference>
<dbReference type="GO" id="GO:0005654">
    <property type="term" value="C:nucleoplasm"/>
    <property type="evidence" value="ECO:0000314"/>
    <property type="project" value="HPA"/>
</dbReference>
<dbReference type="GO" id="GO:0005634">
    <property type="term" value="C:nucleus"/>
    <property type="evidence" value="ECO:0000314"/>
    <property type="project" value="UniProtKB"/>
</dbReference>
<dbReference type="GO" id="GO:0048471">
    <property type="term" value="C:perinuclear region of cytoplasm"/>
    <property type="evidence" value="ECO:0007669"/>
    <property type="project" value="Ensembl"/>
</dbReference>
<dbReference type="GO" id="GO:0005886">
    <property type="term" value="C:plasma membrane"/>
    <property type="evidence" value="ECO:0000314"/>
    <property type="project" value="BHF-UCL"/>
</dbReference>
<dbReference type="GO" id="GO:0032991">
    <property type="term" value="C:protein-containing complex"/>
    <property type="evidence" value="ECO:0000314"/>
    <property type="project" value="UniProtKB"/>
</dbReference>
<dbReference type="GO" id="GO:0090575">
    <property type="term" value="C:RNA polymerase II transcription regulator complex"/>
    <property type="evidence" value="ECO:0000314"/>
    <property type="project" value="ComplexPortal"/>
</dbReference>
<dbReference type="GO" id="GO:0005667">
    <property type="term" value="C:transcription regulator complex"/>
    <property type="evidence" value="ECO:0000353"/>
    <property type="project" value="ComplexPortal"/>
</dbReference>
<dbReference type="GO" id="GO:0051393">
    <property type="term" value="F:alpha-actinin binding"/>
    <property type="evidence" value="ECO:0000353"/>
    <property type="project" value="UniProtKB"/>
</dbReference>
<dbReference type="GO" id="GO:0003682">
    <property type="term" value="F:chromatin binding"/>
    <property type="evidence" value="ECO:0000314"/>
    <property type="project" value="UniProtKB"/>
</dbReference>
<dbReference type="GO" id="GO:0031490">
    <property type="term" value="F:chromatin DNA binding"/>
    <property type="evidence" value="ECO:0000314"/>
    <property type="project" value="UniProtKB"/>
</dbReference>
<dbReference type="GO" id="GO:0003700">
    <property type="term" value="F:DNA-binding transcription factor activity"/>
    <property type="evidence" value="ECO:0000314"/>
    <property type="project" value="UniProtKB"/>
</dbReference>
<dbReference type="GO" id="GO:0000981">
    <property type="term" value="F:DNA-binding transcription factor activity, RNA polymerase II-specific"/>
    <property type="evidence" value="ECO:0000247"/>
    <property type="project" value="NTNU_SB"/>
</dbReference>
<dbReference type="GO" id="GO:0001217">
    <property type="term" value="F:DNA-binding transcription repressor activity"/>
    <property type="evidence" value="ECO:0000315"/>
    <property type="project" value="ARUK-UCL"/>
</dbReference>
<dbReference type="GO" id="GO:0019899">
    <property type="term" value="F:enzyme binding"/>
    <property type="evidence" value="ECO:0000353"/>
    <property type="project" value="UniProtKB"/>
</dbReference>
<dbReference type="GO" id="GO:1901363">
    <property type="term" value="F:heterocyclic compound binding"/>
    <property type="evidence" value="ECO:0007669"/>
    <property type="project" value="Ensembl"/>
</dbReference>
<dbReference type="GO" id="GO:0042826">
    <property type="term" value="F:histone deacetylase binding"/>
    <property type="evidence" value="ECO:0007669"/>
    <property type="project" value="Ensembl"/>
</dbReference>
<dbReference type="GO" id="GO:0048027">
    <property type="term" value="F:mRNA 5'-UTR binding"/>
    <property type="evidence" value="ECO:0007669"/>
    <property type="project" value="Ensembl"/>
</dbReference>
<dbReference type="GO" id="GO:0000900">
    <property type="term" value="F:mRNA regulatory element binding translation repressor activity"/>
    <property type="evidence" value="ECO:0007669"/>
    <property type="project" value="Ensembl"/>
</dbReference>
<dbReference type="GO" id="GO:0004879">
    <property type="term" value="F:nuclear receptor activity"/>
    <property type="evidence" value="ECO:0000314"/>
    <property type="project" value="ARUK-UCL"/>
</dbReference>
<dbReference type="GO" id="GO:0019904">
    <property type="term" value="F:protein domain specific binding"/>
    <property type="evidence" value="ECO:0000353"/>
    <property type="project" value="UniProtKB"/>
</dbReference>
<dbReference type="GO" id="GO:0051018">
    <property type="term" value="F:protein kinase A binding"/>
    <property type="evidence" value="ECO:0000314"/>
    <property type="project" value="UniProtKB"/>
</dbReference>
<dbReference type="GO" id="GO:0043422">
    <property type="term" value="F:protein kinase B binding"/>
    <property type="evidence" value="ECO:0000353"/>
    <property type="project" value="UniProtKB"/>
</dbReference>
<dbReference type="GO" id="GO:0001972">
    <property type="term" value="F:retinoic acid binding"/>
    <property type="evidence" value="ECO:0000314"/>
    <property type="project" value="BHF-UCL"/>
</dbReference>
<dbReference type="GO" id="GO:0044323">
    <property type="term" value="F:retinoic acid-responsive element binding"/>
    <property type="evidence" value="ECO:0000314"/>
    <property type="project" value="UniProtKB"/>
</dbReference>
<dbReference type="GO" id="GO:0000978">
    <property type="term" value="F:RNA polymerase II cis-regulatory region sequence-specific DNA binding"/>
    <property type="evidence" value="ECO:0000314"/>
    <property type="project" value="UniProtKB"/>
</dbReference>
<dbReference type="GO" id="GO:0000977">
    <property type="term" value="F:RNA polymerase II transcription regulatory region sequence-specific DNA binding"/>
    <property type="evidence" value="ECO:0000314"/>
    <property type="project" value="UniProtKB"/>
</dbReference>
<dbReference type="GO" id="GO:1990837">
    <property type="term" value="F:sequence-specific double-stranded DNA binding"/>
    <property type="evidence" value="ECO:0000314"/>
    <property type="project" value="ARUK-UCL"/>
</dbReference>
<dbReference type="GO" id="GO:0005102">
    <property type="term" value="F:signaling receptor binding"/>
    <property type="evidence" value="ECO:0000314"/>
    <property type="project" value="UniProtKB"/>
</dbReference>
<dbReference type="GO" id="GO:0001223">
    <property type="term" value="F:transcription coactivator binding"/>
    <property type="evidence" value="ECO:0000353"/>
    <property type="project" value="UniProtKB"/>
</dbReference>
<dbReference type="GO" id="GO:0008270">
    <property type="term" value="F:zinc ion binding"/>
    <property type="evidence" value="ECO:0007669"/>
    <property type="project" value="UniProtKB-KW"/>
</dbReference>
<dbReference type="GO" id="GO:0043277">
    <property type="term" value="P:apoptotic cell clearance"/>
    <property type="evidence" value="ECO:0000315"/>
    <property type="project" value="UniProtKB"/>
</dbReference>
<dbReference type="GO" id="GO:0030154">
    <property type="term" value="P:cell differentiation"/>
    <property type="evidence" value="ECO:0000318"/>
    <property type="project" value="GO_Central"/>
</dbReference>
<dbReference type="GO" id="GO:0071391">
    <property type="term" value="P:cellular response to estrogen stimulus"/>
    <property type="evidence" value="ECO:0000314"/>
    <property type="project" value="UniProtKB"/>
</dbReference>
<dbReference type="GO" id="GO:0071222">
    <property type="term" value="P:cellular response to lipopolysaccharide"/>
    <property type="evidence" value="ECO:0007669"/>
    <property type="project" value="Ensembl"/>
</dbReference>
<dbReference type="GO" id="GO:0071300">
    <property type="term" value="P:cellular response to retinoic acid"/>
    <property type="evidence" value="ECO:0000315"/>
    <property type="project" value="ARUK-UCL"/>
</dbReference>
<dbReference type="GO" id="GO:0060591">
    <property type="term" value="P:chondroblast differentiation"/>
    <property type="evidence" value="ECO:0007669"/>
    <property type="project" value="Ensembl"/>
</dbReference>
<dbReference type="GO" id="GO:0031076">
    <property type="term" value="P:embryonic camera-type eye development"/>
    <property type="evidence" value="ECO:0007669"/>
    <property type="project" value="Ensembl"/>
</dbReference>
<dbReference type="GO" id="GO:0060324">
    <property type="term" value="P:face development"/>
    <property type="evidence" value="ECO:0007669"/>
    <property type="project" value="Ensembl"/>
</dbReference>
<dbReference type="GO" id="GO:0007565">
    <property type="term" value="P:female pregnancy"/>
    <property type="evidence" value="ECO:0007669"/>
    <property type="project" value="Ensembl"/>
</dbReference>
<dbReference type="GO" id="GO:0007281">
    <property type="term" value="P:germ cell development"/>
    <property type="evidence" value="ECO:0007669"/>
    <property type="project" value="Ensembl"/>
</dbReference>
<dbReference type="GO" id="GO:0002068">
    <property type="term" value="P:glandular epithelial cell development"/>
    <property type="evidence" value="ECO:0007669"/>
    <property type="project" value="Ensembl"/>
</dbReference>
<dbReference type="GO" id="GO:0003417">
    <property type="term" value="P:growth plate cartilage development"/>
    <property type="evidence" value="ECO:0007669"/>
    <property type="project" value="Ensembl"/>
</dbReference>
<dbReference type="GO" id="GO:0021766">
    <property type="term" value="P:hippocampus development"/>
    <property type="evidence" value="ECO:0007669"/>
    <property type="project" value="Ensembl"/>
</dbReference>
<dbReference type="GO" id="GO:0060173">
    <property type="term" value="P:limb development"/>
    <property type="evidence" value="ECO:0007669"/>
    <property type="project" value="Ensembl"/>
</dbReference>
<dbReference type="GO" id="GO:0001889">
    <property type="term" value="P:liver development"/>
    <property type="evidence" value="ECO:0007669"/>
    <property type="project" value="Ensembl"/>
</dbReference>
<dbReference type="GO" id="GO:0042789">
    <property type="term" value="P:mRNA transcription by RNA polymerase II"/>
    <property type="evidence" value="ECO:0000314"/>
    <property type="project" value="ComplexPortal"/>
</dbReference>
<dbReference type="GO" id="GO:0035264">
    <property type="term" value="P:multicellular organism growth"/>
    <property type="evidence" value="ECO:0007669"/>
    <property type="project" value="Ensembl"/>
</dbReference>
<dbReference type="GO" id="GO:0043066">
    <property type="term" value="P:negative regulation of apoptotic process"/>
    <property type="evidence" value="ECO:0007669"/>
    <property type="project" value="Ensembl"/>
</dbReference>
<dbReference type="GO" id="GO:0061037">
    <property type="term" value="P:negative regulation of cartilage development"/>
    <property type="evidence" value="ECO:0007669"/>
    <property type="project" value="Ensembl"/>
</dbReference>
<dbReference type="GO" id="GO:0008285">
    <property type="term" value="P:negative regulation of cell population proliferation"/>
    <property type="evidence" value="ECO:0007669"/>
    <property type="project" value="Ensembl"/>
</dbReference>
<dbReference type="GO" id="GO:0045892">
    <property type="term" value="P:negative regulation of DNA-templated transcription"/>
    <property type="evidence" value="ECO:0000314"/>
    <property type="project" value="UniProtKB"/>
</dbReference>
<dbReference type="GO" id="GO:0030853">
    <property type="term" value="P:negative regulation of granulocyte differentiation"/>
    <property type="evidence" value="ECO:0000314"/>
    <property type="project" value="UniProtKB"/>
</dbReference>
<dbReference type="GO" id="GO:1902894">
    <property type="term" value="P:negative regulation of miRNA transcription"/>
    <property type="evidence" value="ECO:0000315"/>
    <property type="project" value="ARUK-UCL"/>
</dbReference>
<dbReference type="GO" id="GO:0000122">
    <property type="term" value="P:negative regulation of transcription by RNA polymerase II"/>
    <property type="evidence" value="ECO:0000318"/>
    <property type="project" value="GO_Central"/>
</dbReference>
<dbReference type="GO" id="GO:0032720">
    <property type="term" value="P:negative regulation of tumor necrosis factor production"/>
    <property type="evidence" value="ECO:0000314"/>
    <property type="project" value="BHF-UCL"/>
</dbReference>
<dbReference type="GO" id="GO:0032689">
    <property type="term" value="P:negative regulation of type II interferon production"/>
    <property type="evidence" value="ECO:0000314"/>
    <property type="project" value="BHF-UCL"/>
</dbReference>
<dbReference type="GO" id="GO:0001843">
    <property type="term" value="P:neural tube closure"/>
    <property type="evidence" value="ECO:0007669"/>
    <property type="project" value="Ensembl"/>
</dbReference>
<dbReference type="GO" id="GO:0003148">
    <property type="term" value="P:outflow tract septum morphogenesis"/>
    <property type="evidence" value="ECO:0007669"/>
    <property type="project" value="Ensembl"/>
</dbReference>
<dbReference type="GO" id="GO:0051099">
    <property type="term" value="P:positive regulation of binding"/>
    <property type="evidence" value="ECO:0000315"/>
    <property type="project" value="UniProtKB"/>
</dbReference>
<dbReference type="GO" id="GO:0045787">
    <property type="term" value="P:positive regulation of cell cycle"/>
    <property type="evidence" value="ECO:0000315"/>
    <property type="project" value="UniProtKB"/>
</dbReference>
<dbReference type="GO" id="GO:0008284">
    <property type="term" value="P:positive regulation of cell population proliferation"/>
    <property type="evidence" value="ECO:0000315"/>
    <property type="project" value="UniProtKB"/>
</dbReference>
<dbReference type="GO" id="GO:0045893">
    <property type="term" value="P:positive regulation of DNA-templated transcription"/>
    <property type="evidence" value="ECO:0000314"/>
    <property type="project" value="UniProtKB"/>
</dbReference>
<dbReference type="GO" id="GO:0032736">
    <property type="term" value="P:positive regulation of interleukin-13 production"/>
    <property type="evidence" value="ECO:0000314"/>
    <property type="project" value="BHF-UCL"/>
</dbReference>
<dbReference type="GO" id="GO:0032753">
    <property type="term" value="P:positive regulation of interleukin-4 production"/>
    <property type="evidence" value="ECO:0000314"/>
    <property type="project" value="BHF-UCL"/>
</dbReference>
<dbReference type="GO" id="GO:0032754">
    <property type="term" value="P:positive regulation of interleukin-5 production"/>
    <property type="evidence" value="ECO:0000314"/>
    <property type="project" value="BHF-UCL"/>
</dbReference>
<dbReference type="GO" id="GO:0045666">
    <property type="term" value="P:positive regulation of neuron differentiation"/>
    <property type="evidence" value="ECO:0007669"/>
    <property type="project" value="Ensembl"/>
</dbReference>
<dbReference type="GO" id="GO:0045630">
    <property type="term" value="P:positive regulation of T-helper 2 cell differentiation"/>
    <property type="evidence" value="ECO:0000314"/>
    <property type="project" value="BHF-UCL"/>
</dbReference>
<dbReference type="GO" id="GO:0045944">
    <property type="term" value="P:positive regulation of transcription by RNA polymerase II"/>
    <property type="evidence" value="ECO:0000314"/>
    <property type="project" value="UniProtKB"/>
</dbReference>
<dbReference type="GO" id="GO:0030850">
    <property type="term" value="P:prostate gland development"/>
    <property type="evidence" value="ECO:0007669"/>
    <property type="project" value="Ensembl"/>
</dbReference>
<dbReference type="GO" id="GO:0006468">
    <property type="term" value="P:protein phosphorylation"/>
    <property type="evidence" value="ECO:0000315"/>
    <property type="project" value="UniProtKB"/>
</dbReference>
<dbReference type="GO" id="GO:1901532">
    <property type="term" value="P:regulation of hematopoietic progenitor cell differentiation"/>
    <property type="evidence" value="ECO:0007669"/>
    <property type="project" value="Ensembl"/>
</dbReference>
<dbReference type="GO" id="GO:0031641">
    <property type="term" value="P:regulation of myelination"/>
    <property type="evidence" value="ECO:0007669"/>
    <property type="project" value="Ensembl"/>
</dbReference>
<dbReference type="GO" id="GO:0048167">
    <property type="term" value="P:regulation of synaptic plasticity"/>
    <property type="evidence" value="ECO:0007669"/>
    <property type="project" value="Ensembl"/>
</dbReference>
<dbReference type="GO" id="GO:0034097">
    <property type="term" value="P:response to cytokine"/>
    <property type="evidence" value="ECO:0007669"/>
    <property type="project" value="Ensembl"/>
</dbReference>
<dbReference type="GO" id="GO:0032355">
    <property type="term" value="P:response to estradiol"/>
    <property type="evidence" value="ECO:0007669"/>
    <property type="project" value="Ensembl"/>
</dbReference>
<dbReference type="GO" id="GO:0045471">
    <property type="term" value="P:response to ethanol"/>
    <property type="evidence" value="ECO:0007669"/>
    <property type="project" value="Ensembl"/>
</dbReference>
<dbReference type="GO" id="GO:0032526">
    <property type="term" value="P:response to retinoic acid"/>
    <property type="evidence" value="ECO:0000315"/>
    <property type="project" value="BHF-UCL"/>
</dbReference>
<dbReference type="GO" id="GO:0033189">
    <property type="term" value="P:response to vitamin A"/>
    <property type="evidence" value="ECO:0007669"/>
    <property type="project" value="Ensembl"/>
</dbReference>
<dbReference type="GO" id="GO:0048384">
    <property type="term" value="P:retinoic acid receptor signaling pathway"/>
    <property type="evidence" value="ECO:0000314"/>
    <property type="project" value="UniProtKB"/>
</dbReference>
<dbReference type="GO" id="GO:0060010">
    <property type="term" value="P:Sertoli cell fate commitment"/>
    <property type="evidence" value="ECO:0007669"/>
    <property type="project" value="Ensembl"/>
</dbReference>
<dbReference type="GO" id="GO:0007283">
    <property type="term" value="P:spermatogenesis"/>
    <property type="evidence" value="ECO:0007669"/>
    <property type="project" value="Ensembl"/>
</dbReference>
<dbReference type="GO" id="GO:0060534">
    <property type="term" value="P:trachea cartilage development"/>
    <property type="evidence" value="ECO:0007669"/>
    <property type="project" value="Ensembl"/>
</dbReference>
<dbReference type="GO" id="GO:0001657">
    <property type="term" value="P:ureteric bud development"/>
    <property type="evidence" value="ECO:0007669"/>
    <property type="project" value="Ensembl"/>
</dbReference>
<dbReference type="GO" id="GO:0055012">
    <property type="term" value="P:ventricular cardiac muscle cell differentiation"/>
    <property type="evidence" value="ECO:0007669"/>
    <property type="project" value="Ensembl"/>
</dbReference>
<dbReference type="CDD" id="cd06964">
    <property type="entry name" value="NR_DBD_RAR"/>
    <property type="match status" value="1"/>
</dbReference>
<dbReference type="CDD" id="cd06937">
    <property type="entry name" value="NR_LBD_RAR"/>
    <property type="match status" value="1"/>
</dbReference>
<dbReference type="FunFam" id="1.10.565.10:FF:000073">
    <property type="entry name" value="Retinoic acid receptor beta"/>
    <property type="match status" value="1"/>
</dbReference>
<dbReference type="FunFam" id="3.30.50.10:FF:000004">
    <property type="entry name" value="Retinoic acid receptor beta isoform"/>
    <property type="match status" value="1"/>
</dbReference>
<dbReference type="Gene3D" id="3.30.50.10">
    <property type="entry name" value="Erythroid Transcription Factor GATA-1, subunit A"/>
    <property type="match status" value="1"/>
</dbReference>
<dbReference type="Gene3D" id="1.10.565.10">
    <property type="entry name" value="Retinoid X Receptor"/>
    <property type="match status" value="1"/>
</dbReference>
<dbReference type="IDEAL" id="IID00365"/>
<dbReference type="InterPro" id="IPR035500">
    <property type="entry name" value="NHR-like_dom_sf"/>
</dbReference>
<dbReference type="InterPro" id="IPR047159">
    <property type="entry name" value="NR_DBD_RAR"/>
</dbReference>
<dbReference type="InterPro" id="IPR047158">
    <property type="entry name" value="NR_LBD_RAR"/>
</dbReference>
<dbReference type="InterPro" id="IPR000536">
    <property type="entry name" value="Nucl_hrmn_rcpt_lig-bd"/>
</dbReference>
<dbReference type="InterPro" id="IPR001723">
    <property type="entry name" value="Nuclear_hrmn_rcpt"/>
</dbReference>
<dbReference type="InterPro" id="IPR003078">
    <property type="entry name" value="Retinoic_acid_rcpt"/>
</dbReference>
<dbReference type="InterPro" id="IPR001628">
    <property type="entry name" value="Znf_hrmn_rcpt"/>
</dbReference>
<dbReference type="InterPro" id="IPR013088">
    <property type="entry name" value="Znf_NHR/GATA"/>
</dbReference>
<dbReference type="PANTHER" id="PTHR24085">
    <property type="entry name" value="NUCLEAR HORMONE RECEPTOR"/>
    <property type="match status" value="1"/>
</dbReference>
<dbReference type="PANTHER" id="PTHR24085:SF8">
    <property type="entry name" value="RETINOIC ACID RECEPTOR ALPHA"/>
    <property type="match status" value="1"/>
</dbReference>
<dbReference type="Pfam" id="PF00104">
    <property type="entry name" value="Hormone_recep"/>
    <property type="match status" value="1"/>
</dbReference>
<dbReference type="Pfam" id="PF00105">
    <property type="entry name" value="zf-C4"/>
    <property type="match status" value="1"/>
</dbReference>
<dbReference type="PRINTS" id="PR01292">
    <property type="entry name" value="RETNOICACIDR"/>
</dbReference>
<dbReference type="PRINTS" id="PR00398">
    <property type="entry name" value="STRDHORMONER"/>
</dbReference>
<dbReference type="PRINTS" id="PR00047">
    <property type="entry name" value="STROIDFINGER"/>
</dbReference>
<dbReference type="SMART" id="SM00430">
    <property type="entry name" value="HOLI"/>
    <property type="match status" value="1"/>
</dbReference>
<dbReference type="SMART" id="SM00399">
    <property type="entry name" value="ZnF_C4"/>
    <property type="match status" value="1"/>
</dbReference>
<dbReference type="SUPFAM" id="SSF57716">
    <property type="entry name" value="Glucocorticoid receptor-like (DNA-binding domain)"/>
    <property type="match status" value="1"/>
</dbReference>
<dbReference type="SUPFAM" id="SSF48508">
    <property type="entry name" value="Nuclear receptor ligand-binding domain"/>
    <property type="match status" value="1"/>
</dbReference>
<dbReference type="PROSITE" id="PS51843">
    <property type="entry name" value="NR_LBD"/>
    <property type="match status" value="1"/>
</dbReference>
<dbReference type="PROSITE" id="PS00031">
    <property type="entry name" value="NUCLEAR_REC_DBD_1"/>
    <property type="match status" value="1"/>
</dbReference>
<dbReference type="PROSITE" id="PS51030">
    <property type="entry name" value="NUCLEAR_REC_DBD_2"/>
    <property type="match status" value="1"/>
</dbReference>
<organism>
    <name type="scientific">Homo sapiens</name>
    <name type="common">Human</name>
    <dbReference type="NCBI Taxonomy" id="9606"/>
    <lineage>
        <taxon>Eukaryota</taxon>
        <taxon>Metazoa</taxon>
        <taxon>Chordata</taxon>
        <taxon>Craniata</taxon>
        <taxon>Vertebrata</taxon>
        <taxon>Euteleostomi</taxon>
        <taxon>Mammalia</taxon>
        <taxon>Eutheria</taxon>
        <taxon>Euarchontoglires</taxon>
        <taxon>Primates</taxon>
        <taxon>Haplorrhini</taxon>
        <taxon>Catarrhini</taxon>
        <taxon>Hominidae</taxon>
        <taxon>Homo</taxon>
    </lineage>
</organism>
<accession>P10276</accession>
<accession>B8Y636</accession>
<accession>P78456</accession>
<accession>Q13440</accession>
<accession>Q13441</accession>
<accession>Q96S41</accession>
<accession>Q9NQS0</accession>
<evidence type="ECO:0000250" key="1"/>
<evidence type="ECO:0000250" key="2">
    <source>
        <dbReference type="UniProtKB" id="P11416"/>
    </source>
</evidence>
<evidence type="ECO:0000255" key="3">
    <source>
        <dbReference type="PROSITE-ProRule" id="PRU00407"/>
    </source>
</evidence>
<evidence type="ECO:0000255" key="4">
    <source>
        <dbReference type="PROSITE-ProRule" id="PRU01189"/>
    </source>
</evidence>
<evidence type="ECO:0000256" key="5">
    <source>
        <dbReference type="SAM" id="MobiDB-lite"/>
    </source>
</evidence>
<evidence type="ECO:0000269" key="6">
    <source>
    </source>
</evidence>
<evidence type="ECO:0000269" key="7">
    <source>
    </source>
</evidence>
<evidence type="ECO:0000269" key="8">
    <source>
    </source>
</evidence>
<evidence type="ECO:0000269" key="9">
    <source>
    </source>
</evidence>
<evidence type="ECO:0000269" key="10">
    <source>
    </source>
</evidence>
<evidence type="ECO:0000269" key="11">
    <source>
    </source>
</evidence>
<evidence type="ECO:0000269" key="12">
    <source>
    </source>
</evidence>
<evidence type="ECO:0000269" key="13">
    <source>
    </source>
</evidence>
<evidence type="ECO:0000269" key="14">
    <source>
    </source>
</evidence>
<evidence type="ECO:0000269" key="15">
    <source>
    </source>
</evidence>
<evidence type="ECO:0000269" key="16">
    <source>
    </source>
</evidence>
<evidence type="ECO:0000269" key="17">
    <source>
    </source>
</evidence>
<evidence type="ECO:0000269" key="18">
    <source>
    </source>
</evidence>
<evidence type="ECO:0000269" key="19">
    <source>
    </source>
</evidence>
<evidence type="ECO:0000269" key="20">
    <source>
    </source>
</evidence>
<evidence type="ECO:0000269" key="21">
    <source>
    </source>
</evidence>
<evidence type="ECO:0000269" key="22">
    <source>
    </source>
</evidence>
<evidence type="ECO:0000269" key="23">
    <source>
    </source>
</evidence>
<evidence type="ECO:0000269" key="24">
    <source>
    </source>
</evidence>
<evidence type="ECO:0000269" key="25">
    <source>
    </source>
</evidence>
<evidence type="ECO:0000269" key="26">
    <source>
    </source>
</evidence>
<evidence type="ECO:0000269" key="27">
    <source>
    </source>
</evidence>
<evidence type="ECO:0000269" key="28">
    <source>
    </source>
</evidence>
<evidence type="ECO:0000269" key="29">
    <source>
    </source>
</evidence>
<evidence type="ECO:0000269" key="30">
    <source>
    </source>
</evidence>
<evidence type="ECO:0000269" key="31">
    <source>
    </source>
</evidence>
<evidence type="ECO:0000269" key="32">
    <source>
    </source>
</evidence>
<evidence type="ECO:0000269" key="33">
    <source>
    </source>
</evidence>
<evidence type="ECO:0000303" key="34">
    <source>
    </source>
</evidence>
<evidence type="ECO:0000303" key="35">
    <source>
    </source>
</evidence>
<evidence type="ECO:0000305" key="36"/>
<evidence type="ECO:0000305" key="37">
    <source>
    </source>
</evidence>
<evidence type="ECO:0007744" key="38">
    <source>
        <dbReference type="PDB" id="3A9E"/>
    </source>
</evidence>
<evidence type="ECO:0007829" key="39">
    <source>
        <dbReference type="PDB" id="1DSZ"/>
    </source>
</evidence>
<evidence type="ECO:0007829" key="40">
    <source>
        <dbReference type="PDB" id="3KMR"/>
    </source>
</evidence>
<evidence type="ECO:0007829" key="41">
    <source>
        <dbReference type="PDB" id="5K13"/>
    </source>
</evidence>
<evidence type="ECO:0007829" key="42">
    <source>
        <dbReference type="PDB" id="6XWG"/>
    </source>
</evidence>
<comment type="function">
    <text evidence="2 15 19 20 22 24 28 30 33">Receptor for retinoic acid (PubMed:16417524, PubMed:19850744, PubMed:20215566, PubMed:21152046, PubMed:37478846). Retinoic acid receptors bind as heterodimers to their target response elements in response to their ligands, all-trans or 9-cis retinoic acid, and regulate gene expression in various biological processes (PubMed:21152046, PubMed:28167758, PubMed:37478846). The RXR/RAR heterodimers bind to the retinoic acid response elements (RARE) composed of tandem 5'-AGGTCA-3' sites known as DR1-DR5 (PubMed:19398580, PubMed:28167758). In the absence of ligand, the RXR-RAR heterodimers associate with a multiprotein complex containing transcription corepressors that induce histone deacetylation, chromatin condensation and transcriptional suppression (PubMed:16417524). On ligand binding, the corepressors dissociate from the receptors and associate with the coactivators leading to transcriptional activation (PubMed:19850744, PubMed:20215566, PubMed:37478846, PubMed:9267036). Formation of a complex with histone deacetylases might lead to inhibition of RARE DNA element binding and to transcriptional repression (PubMed:28167758). Transcriptional activation and RARE DNA element binding might be supported by the transcription factor KLF2 (PubMed:28167758). RARA plays an essential role in the regulation of retinoic acid-induced germ cell development during spermatogenesis (By similarity). Has a role in the survival of early spermatocytes at the beginning prophase of meiosis (By similarity). In Sertoli cells, may promote the survival and development of early meiotic prophase spermatocytes (By similarity). In concert with RARG, required for skeletal growth, matrix homeostasis and growth plate function (By similarity). Together with RXRA, positively regulates microRNA-10a expression, thereby inhibiting the GATA6/VCAM1 signaling response to pulsatile shear stress in vascular endothelial cells (PubMed:28167758). In association with HDAC3, HDAC5 and HDAC7 corepressors, plays a role in the repression of microRNA-10a and thereby promotes the inflammatory response (PubMed:28167758).</text>
</comment>
<comment type="subunit">
    <text evidence="2 6 7 8 9 10 12 14 15 16 17 21 22 23 24 25 28 29 33">Heterodimer; with RXRA (via C-terminus); association with RXRA is enhanced by pulsatile shear stress (PubMed:10698945, PubMed:10882070, PubMed:15509776, PubMed:20215566, PubMed:21152046, PubMed:28167758). Binds DNA preferentially as a heterodimer (PubMed:10698945, PubMed:28167758). RXRA serves as enhancer to induce RARA binding to RARE (PubMed:30468856). Interacts with RXRG (PubMed:28167758). Interacts with coactivators NCOA3 and NCOA6 (PubMed:10567404, PubMed:9267036). Interacts with NCOA7; the interaction requires ligand-binding (PubMed:11971969). Interacts (via the ligand-binding domain) with PRAME; the interaction is ligand (retinoic acid)-dependent (PubMed:16179254). Interacts with AKT1; the interaction phosphorylates RARA and represses transactivation (PubMed:16417524). Interacts with PRKAR1A; the interaction negatively regulates RARA transcriptional activity (PubMed:20215566). Interacts with NCOR1 and NCOR2 (PubMed:20543827). Interacts with PRMT2 (PubMed:12039952). Interacts with LRIF1 (PubMed:17455211). Interacts with ASXL1 and NCOA1 (PubMed:16606617). Interacts with ACTN4 (PubMed:22351778). In a complex with HDAC3, HDAC5 and HDAC7; the HDACs serve as corepressors of RARA, causing its deacetylation and inhibition of RARE DNA element binding; association with HDAC3, HDAC5 and HDAC7 is increased upon oscillatory shear stress (PubMed:28167758). Interacts with CDK7 (By similarity). In the absence of hormonal ligand, interacts with TACC1 (PubMed:20078863).</text>
</comment>
<comment type="interaction">
    <interactant intactId="EBI-413374">
        <id>P10276</id>
    </interactant>
    <interactant intactId="EBI-15971664">
        <id>O43707-1</id>
        <label>ACTN4</label>
    </interactant>
    <organismsDiffer>false</organismsDiffer>
    <experiments>2</experiments>
</comment>
<comment type="interaction">
    <interactant intactId="EBI-413374">
        <id>P10276</id>
    </interactant>
    <interactant intactId="EBI-12150557">
        <id>O15296</id>
        <label>ALOX15B</label>
    </interactant>
    <organismsDiffer>false</organismsDiffer>
    <experiments>3</experiments>
</comment>
<comment type="interaction">
    <interactant intactId="EBI-413374">
        <id>P10276</id>
    </interactant>
    <interactant intactId="EBI-750671">
        <id>Q15699</id>
        <label>ALX1</label>
    </interactant>
    <organismsDiffer>false</organismsDiffer>
    <experiments>3</experiments>
</comment>
<comment type="interaction">
    <interactant intactId="EBI-413374">
        <id>P10276</id>
    </interactant>
    <interactant intactId="EBI-1805814">
        <id>Q96RK4</id>
        <label>BBS4</label>
    </interactant>
    <organismsDiffer>false</organismsDiffer>
    <experiments>3</experiments>
</comment>
<comment type="interaction">
    <interactant intactId="EBI-413374">
        <id>P10276</id>
    </interactant>
    <interactant intactId="EBI-748961">
        <id>O95273</id>
        <label>CCNDBP1</label>
    </interactant>
    <organismsDiffer>false</organismsDiffer>
    <experiments>3</experiments>
</comment>
<comment type="interaction">
    <interactant intactId="EBI-413374">
        <id>P10276</id>
    </interactant>
    <interactant intactId="EBI-741406">
        <id>P51946</id>
        <label>CCNH</label>
    </interactant>
    <organismsDiffer>false</organismsDiffer>
    <experiments>2</experiments>
</comment>
<comment type="interaction">
    <interactant intactId="EBI-413374">
        <id>P10276</id>
    </interactant>
    <interactant intactId="EBI-530054">
        <id>Q15910</id>
        <label>EZH2</label>
    </interactant>
    <organismsDiffer>false</organismsDiffer>
    <experiments>2</experiments>
</comment>
<comment type="interaction">
    <interactant intactId="EBI-413374">
        <id>P10276</id>
    </interactant>
    <interactant intactId="EBI-3909604">
        <id>P50148</id>
        <label>GNAQ</label>
    </interactant>
    <organismsDiffer>false</organismsDiffer>
    <experiments>4</experiments>
</comment>
<comment type="interaction">
    <interactant intactId="EBI-413374">
        <id>P10276</id>
    </interactant>
    <interactant intactId="EBI-5659717">
        <id>Q9UKP3</id>
        <label>ITGB1BP2</label>
    </interactant>
    <organismsDiffer>false</organismsDiffer>
    <experiments>2</experiments>
</comment>
<comment type="interaction">
    <interactant intactId="EBI-413374">
        <id>P10276</id>
    </interactant>
    <interactant intactId="EBI-348259">
        <id>Q96EZ8</id>
        <label>MCRS1</label>
    </interactant>
    <organismsDiffer>false</organismsDiffer>
    <experiments>3</experiments>
</comment>
<comment type="interaction">
    <interactant intactId="EBI-413374">
        <id>P10276</id>
    </interactant>
    <interactant intactId="EBI-394459">
        <id>Q15648</id>
        <label>MED1</label>
    </interactant>
    <organismsDiffer>false</organismsDiffer>
    <experiments>6</experiments>
</comment>
<comment type="interaction">
    <interactant intactId="EBI-413374">
        <id>P10276</id>
    </interactant>
    <interactant intactId="EBI-394558">
        <id>Q71SY5</id>
        <label>MED25</label>
    </interactant>
    <organismsDiffer>false</organismsDiffer>
    <experiments>10</experiments>
</comment>
<comment type="interaction">
    <interactant intactId="EBI-413374">
        <id>P10276</id>
    </interactant>
    <interactant intactId="EBI-455189">
        <id>Q15788</id>
        <label>NCOA1</label>
    </interactant>
    <organismsDiffer>false</organismsDiffer>
    <experiments>7</experiments>
</comment>
<comment type="interaction">
    <interactant intactId="EBI-413374">
        <id>P10276</id>
    </interactant>
    <interactant intactId="EBI-81196">
        <id>Q9Y6Q9</id>
        <label>NCOA3</label>
    </interactant>
    <organismsDiffer>false</organismsDiffer>
    <experiments>2</experiments>
</comment>
<comment type="interaction">
    <interactant intactId="EBI-413374">
        <id>P10276</id>
    </interactant>
    <interactant intactId="EBI-347233">
        <id>O75376</id>
        <label>NCOR1</label>
    </interactant>
    <organismsDiffer>false</organismsDiffer>
    <experiments>6</experiments>
</comment>
<comment type="interaction">
    <interactant intactId="EBI-413374">
        <id>P10276</id>
    </interactant>
    <interactant intactId="EBI-80830">
        <id>Q9Y618</id>
        <label>NCOR2</label>
    </interactant>
    <organismsDiffer>false</organismsDiffer>
    <experiments>4</experiments>
</comment>
<comment type="interaction">
    <interactant intactId="EBI-413374">
        <id>P10276</id>
    </interactant>
    <interactant intactId="EBI-2007911">
        <id>Q16236</id>
        <label>NFE2L2</label>
    </interactant>
    <organismsDiffer>false</organismsDiffer>
    <experiments>2</experiments>
</comment>
<comment type="interaction">
    <interactant intactId="EBI-413374">
        <id>P10276</id>
    </interactant>
    <interactant intactId="EBI-18764867">
        <id>P13056-2</id>
        <label>NR2C1</label>
    </interactant>
    <organismsDiffer>false</organismsDiffer>
    <experiments>3</experiments>
</comment>
<comment type="interaction">
    <interactant intactId="EBI-413374">
        <id>P10276</id>
    </interactant>
    <interactant intactId="EBI-746484">
        <id>P48552</id>
        <label>NRIP1</label>
    </interactant>
    <organismsDiffer>false</organismsDiffer>
    <experiments>4</experiments>
</comment>
<comment type="interaction">
    <interactant intactId="EBI-413374">
        <id>P10276</id>
    </interactant>
    <interactant intactId="EBI-6601215">
        <id>Q9UPP1-2</id>
        <label>PHF8</label>
    </interactant>
    <organismsDiffer>false</organismsDiffer>
    <experiments>2</experiments>
</comment>
<comment type="interaction">
    <interactant intactId="EBI-413374">
        <id>P10276</id>
    </interactant>
    <interactant intactId="EBI-742388">
        <id>Q9H8W4</id>
        <label>PLEKHF2</label>
    </interactant>
    <organismsDiffer>false</organismsDiffer>
    <experiments>3</experiments>
</comment>
<comment type="interaction">
    <interactant intactId="EBI-413374">
        <id>P10276</id>
    </interactant>
    <interactant intactId="EBI-781384">
        <id>P37231</id>
        <label>PPARG</label>
    </interactant>
    <organismsDiffer>false</organismsDiffer>
    <experiments>3</experiments>
</comment>
<comment type="interaction">
    <interactant intactId="EBI-413374">
        <id>P10276</id>
    </interactant>
    <interactant intactId="EBI-352053">
        <id>P78527</id>
        <label>PRKDC</label>
    </interactant>
    <organismsDiffer>false</organismsDiffer>
    <experiments>3</experiments>
</comment>
<comment type="interaction">
    <interactant intactId="EBI-413374">
        <id>P10276</id>
    </interactant>
    <interactant intactId="EBI-78598">
        <id>P19793</id>
        <label>RXRA</label>
    </interactant>
    <organismsDiffer>false</organismsDiffer>
    <experiments>14</experiments>
</comment>
<comment type="interaction">
    <interactant intactId="EBI-413374">
        <id>P10276</id>
    </interactant>
    <interactant intactId="EBI-748576">
        <id>P28702</id>
        <label>RXRB</label>
    </interactant>
    <organismsDiffer>false</organismsDiffer>
    <experiments>16</experiments>
</comment>
<comment type="interaction">
    <interactant intactId="EBI-413374">
        <id>P10276</id>
    </interactant>
    <interactant intactId="EBI-16429492">
        <id>P28702-3</id>
        <label>RXRB</label>
    </interactant>
    <organismsDiffer>false</organismsDiffer>
    <experiments>3</experiments>
</comment>
<comment type="interaction">
    <interactant intactId="EBI-413374">
        <id>P10276</id>
    </interactant>
    <interactant intactId="EBI-712405">
        <id>P48443</id>
        <label>RXRG</label>
    </interactant>
    <organismsDiffer>false</organismsDiffer>
    <experiments>18</experiments>
</comment>
<comment type="interaction">
    <interactant intactId="EBI-413374">
        <id>P10276</id>
    </interactant>
    <interactant intactId="EBI-1802965">
        <id>Q96EB6</id>
        <label>SIRT1</label>
    </interactant>
    <organismsDiffer>false</organismsDiffer>
    <experiments>3</experiments>
</comment>
<comment type="interaction">
    <interactant intactId="EBI-413374">
        <id>P10276</id>
    </interactant>
    <interactant intactId="EBI-80140">
        <id>P63165</id>
        <label>SUMO1</label>
    </interactant>
    <organismsDiffer>false</organismsDiffer>
    <experiments>5</experiments>
</comment>
<comment type="interaction">
    <interactant intactId="EBI-413374">
        <id>P10276</id>
    </interactant>
    <interactant intactId="EBI-750487">
        <id>Q8WW24</id>
        <label>TEKT4</label>
    </interactant>
    <organismsDiffer>false</organismsDiffer>
    <experiments>4</experiments>
</comment>
<comment type="interaction">
    <interactant intactId="EBI-413374">
        <id>P10276</id>
    </interactant>
    <interactant intactId="EBI-950016">
        <id>Q2M1K9</id>
        <label>ZNF423</label>
    </interactant>
    <organismsDiffer>false</organismsDiffer>
    <experiments>2</experiments>
</comment>
<comment type="interaction">
    <interactant intactId="EBI-413374">
        <id>P10276</id>
    </interactant>
    <interactant intactId="EBI-1565930">
        <id>Q91XC0</id>
        <label>Ajuba</label>
    </interactant>
    <organismsDiffer>true</organismsDiffer>
    <experiments>7</experiments>
</comment>
<comment type="interaction">
    <interactant intactId="EBI-413374">
        <id>P10276</id>
    </interactant>
    <interactant intactId="EBI-5743705">
        <id>P59598</id>
        <label>Asxl1</label>
    </interactant>
    <organismsDiffer>true</organismsDiffer>
    <experiments>4</experiments>
</comment>
<comment type="interaction">
    <interactant intactId="EBI-10197061">
        <id>P10276-2</id>
    </interactant>
    <interactant intactId="EBI-949378">
        <id>Q14457</id>
        <label>BECN1</label>
    </interactant>
    <organismsDiffer>false</organismsDiffer>
    <experiments>3</experiments>
</comment>
<comment type="interaction">
    <interactant intactId="EBI-10197061">
        <id>P10276-2</id>
    </interactant>
    <interactant intactId="EBI-746484">
        <id>P48552</id>
        <label>NRIP1</label>
    </interactant>
    <organismsDiffer>false</organismsDiffer>
    <experiments>3</experiments>
</comment>
<comment type="interaction">
    <interactant intactId="EBI-10197061">
        <id>P10276-2</id>
    </interactant>
    <interactant intactId="EBI-748974">
        <id>Q96CV9</id>
        <label>OPTN</label>
    </interactant>
    <organismsDiffer>false</organismsDiffer>
    <experiments>3</experiments>
</comment>
<comment type="interaction">
    <interactant intactId="EBI-10197061">
        <id>P10276-2</id>
    </interactant>
    <interactant intactId="EBI-748576">
        <id>P28702</id>
        <label>RXRB</label>
    </interactant>
    <organismsDiffer>false</organismsDiffer>
    <experiments>4</experiments>
</comment>
<comment type="interaction">
    <interactant intactId="EBI-10197061">
        <id>P10276-2</id>
    </interactant>
    <interactant intactId="EBI-712405">
        <id>P48443</id>
        <label>RXRG</label>
    </interactant>
    <organismsDiffer>false</organismsDiffer>
    <experiments>6</experiments>
</comment>
<comment type="interaction">
    <interactant intactId="EBI-10197061">
        <id>P10276-2</id>
    </interactant>
    <interactant intactId="EBI-750487">
        <id>Q8WW24</id>
        <label>TEKT4</label>
    </interactant>
    <organismsDiffer>false</organismsDiffer>
    <experiments>3</experiments>
</comment>
<comment type="subcellular location">
    <subcellularLocation>
        <location evidence="20 28">Nucleus</location>
    </subcellularLocation>
    <subcellularLocation>
        <location evidence="20 28">Cytoplasm</location>
    </subcellularLocation>
    <text evidence="2 20 28">Nuclear localization depends on ligand binding, phosphorylation and sumoylation (PubMed:19850744). Translocation to the nucleus in the absence of ligand is dependent on activation of PKC and the downstream MAPK phosphorylation (By similarity). Increased nuclear localization upon pulsatile shear stress (PubMed:28167758).</text>
</comment>
<comment type="alternative products">
    <event type="alternative splicing"/>
    <isoform>
        <id>P10276-1</id>
        <name>Alpha-1</name>
        <sequence type="displayed"/>
    </isoform>
    <isoform>
        <id>P10276-2</id>
        <name>Alpha-2</name>
        <sequence type="described" ref="VSP_003629"/>
    </isoform>
    <isoform>
        <id>P10276-3</id>
        <name>Alpha-1-deltaBC</name>
        <sequence type="described" ref="VSP_043143"/>
    </isoform>
</comment>
<comment type="tissue specificity">
    <text evidence="27">Expressed in monocytes.</text>
</comment>
<comment type="induction">
    <text evidence="19 27 28">Expression is induced ba retinoic acid (PubMed:19398580). Down-regulated by aging (PubMed:26463675). Induced by pulsatile shear stress (PubMed:28167758).</text>
</comment>
<comment type="domain">
    <text>Composed of three domains: a modulating N-terminal domain, a DNA-binding domain and a C-terminal ligand-binding domain.</text>
</comment>
<comment type="domain">
    <text evidence="37">The 9aaTAD motif is a transactivation domain present in a large number of yeast and animal transcription factors.</text>
</comment>
<comment type="PTM">
    <text evidence="1 15 22">Phosphorylated on serine and threonine residues. Phosphorylation does not change during cell cycle. Phosphorylation on Ser-77 is crucial for transcriptional activity (By similarity). Phosphorylation by AKT1 is required for the repressor activity but has no effect on DNA binding, protein stability nor subcellular localization. Phosphorylated by PKA in vitro. This phosphorylation on Ser-219 and Ser-369 is critical for ligand binding, nuclear localization and transcriptional activity in response to FSH signaling.</text>
</comment>
<comment type="PTM">
    <text evidence="13 20">Sumoylated with SUMO2, mainly on Lys-399 which is also required for SENP6 binding. On all-trans retinoic acid (ATRA) binding, a conformational change may occur that allows sumoylation on two additional site, Lys-166 and Lys-171. Probably desumoylated by SENP6. Sumoylation levels determine nuclear localization and regulate ATRA-mediated transcriptional activity.</text>
</comment>
<comment type="PTM">
    <text>Trimethylation enhances heterodimerization with RXRA and positively modulates the transcriptional activation.</text>
</comment>
<comment type="PTM">
    <text evidence="30">Ubiquitinated by UBR5, leading to its degradation: UBR5 specifically recognizes and binds ligand-bound RARA when it is not associated with coactivators (NCOAs) (PubMed:37478846). In presence of NCOAs, the UBR5-degron is not accessible, preventing its ubiquitination and degradation (PubMed:37478846).</text>
</comment>
<comment type="PTM">
    <text evidence="28">Acetylated; acetylation is increased upon pulsatile shear stress and decreased upon oscillatory shear stress.</text>
</comment>
<comment type="disease">
    <text evidence="11 31 32">Chromosomal aberrations involving RARA are commonly found in acute promyelocytic leukemia. Translocation t(11;17)(q32;q21) with ZBTB16/PLZF; translocation t(15;17)(q21;q21) with PML; translocation t(5;17)(q32;q11) with NPM. The PML-RARA oncoprotein requires both the PML ring structure and coiled-coil domain for both interaction with UBE2I, nuclear microspeckle location and sumoylation. In addition, the coiled-coil domain functions in blocking RA-mediated transactivation and cell differentiation.</text>
</comment>
<comment type="miscellaneous">
    <molecule>Isoform Alpha-1-deltaBC</molecule>
    <text evidence="36">Does not bind nor transactivate RARE on its own but may do so as a heterodimer with Alpha-1.</text>
</comment>
<comment type="similarity">
    <text evidence="36">Belongs to the nuclear hormone receptor family. NR1 subfamily.</text>
</comment>
<comment type="caution">
    <text evidence="18 26">Was originally thought to be part of the MLL5-L complex, at least composed of KMT2E, STK38, PPP1CA, PPP1CB, PPP1CC, HCFC1, ACTB and OGT (PubMed:19377461). However, the corresponding article has been retracted (PubMed:24336203).</text>
</comment>
<comment type="sequence caution" evidence="36">
    <conflict type="erroneous initiation">
        <sequence resource="EMBL-CDS" id="AAB00112"/>
    </conflict>
    <text>Extended N-terminus.</text>
</comment>
<comment type="sequence caution" evidence="36">
    <conflict type="erroneous initiation">
        <sequence resource="EMBL-CDS" id="AAB00113"/>
    </conflict>
    <text>Extended N-terminus.</text>
</comment>
<comment type="sequence caution" evidence="36">
    <conflict type="erroneous initiation">
        <sequence resource="EMBL-CDS" id="BAB62809"/>
    </conflict>
    <text>Extended N-terminus.</text>
</comment>
<comment type="online information" name="Atlas of Genetics and Cytogenetics in Oncology and Haematology">
    <link uri="https://atlasgeneticsoncology.org/gene/46/RARA"/>
</comment>
<comment type="online information" name="Wikipedia">
    <link uri="https://en.wikipedia.org/wiki/Retinoic_acid_receptor"/>
    <text>Retinoic acid receptor entry</text>
</comment>
<name>RARA_HUMAN</name>
<protein>
    <recommendedName>
        <fullName>Retinoic acid receptor alpha</fullName>
        <shortName>RAR-alpha</shortName>
    </recommendedName>
    <alternativeName>
        <fullName>Nuclear receptor subfamily 1 group B member 1</fullName>
    </alternativeName>
</protein>
<reference key="1">
    <citation type="journal article" date="1987" name="Nature">
        <title>Identification of a receptor for the morphogen retinoic acid.</title>
        <authorList>
            <person name="Giguere V."/>
            <person name="Ong E.S."/>
            <person name="Segui P."/>
            <person name="Evans R.M."/>
        </authorList>
    </citation>
    <scope>NUCLEOTIDE SEQUENCE [MRNA] (ISOFORM ALPHA-1)</scope>
</reference>
<reference key="2">
    <citation type="journal article" date="1994" name="Proc. Natl. Acad. Sci. U.S.A.">
        <title>PLZF-RAR alpha fusion proteins generated from the variant t(11;17)(q23;q21) translocation in acute promyelocytic leukemia inhibit ligand-dependent transactivation of wild-type retinoic acid receptors.</title>
        <authorList>
            <person name="Chen Z."/>
            <person name="Guidez F."/>
            <person name="Rousselot P."/>
            <person name="Agadir A."/>
            <person name="Chen S.-J."/>
            <person name="Wang Z.-Y."/>
            <person name="Degos L."/>
            <person name="Zelent A."/>
            <person name="Waxman S."/>
            <person name="Chomienne C."/>
        </authorList>
    </citation>
    <scope>NUCLEOTIDE SEQUENCE [MRNA] (ISOFORM ALPHA-1)</scope>
    <scope>CHROMOSOMAL TRANSLOCATION WITH PML</scope>
</reference>
<reference key="3">
    <citation type="journal article" date="1999" name="Mamm. Genome">
        <title>Genomic structure of the human retinoic acid receptor-alpha1 gene.</title>
        <authorList>
            <person name="Hjalt T.A.H."/>
            <person name="Murray J.C."/>
        </authorList>
    </citation>
    <scope>NUCLEOTIDE SEQUENCE [GENOMIC DNA] (ISOFORM ALPHA-1)</scope>
</reference>
<reference key="4">
    <citation type="journal article" date="2001" name="Nucleic Acids Res.">
        <title>Retinoic acid receptor alpha1 variants, RARalpha1DeltaB and RARalpha1DeltaBC, define a new class of nuclear receptor isoforms.</title>
        <authorList>
            <person name="Parrado A."/>
            <person name="Despouy G."/>
            <person name="Kraiba R."/>
            <person name="Le Pogam C."/>
            <person name="Dupas S."/>
            <person name="Choquette M."/>
            <person name="Robledo M."/>
            <person name="Larghero J."/>
            <person name="Bui H."/>
            <person name="Le Gall I."/>
            <person name="Rochette-Egly C."/>
            <person name="Chomienne C."/>
            <person name="Padua R.A."/>
        </authorList>
    </citation>
    <scope>NUCLEOTIDE SEQUENCE [MRNA] (ISOFORM ALPHA-1-DELTABC)</scope>
</reference>
<reference key="5">
    <citation type="journal article" date="2006" name="Nature">
        <title>DNA sequence of human chromosome 17 and analysis of rearrangement in the human lineage.</title>
        <authorList>
            <person name="Zody M.C."/>
            <person name="Garber M."/>
            <person name="Adams D.J."/>
            <person name="Sharpe T."/>
            <person name="Harrow J."/>
            <person name="Lupski J.R."/>
            <person name="Nicholson C."/>
            <person name="Searle S.M."/>
            <person name="Wilming L."/>
            <person name="Young S.K."/>
            <person name="Abouelleil A."/>
            <person name="Allen N.R."/>
            <person name="Bi W."/>
            <person name="Bloom T."/>
            <person name="Borowsky M.L."/>
            <person name="Bugalter B.E."/>
            <person name="Butler J."/>
            <person name="Chang J.L."/>
            <person name="Chen C.-K."/>
            <person name="Cook A."/>
            <person name="Corum B."/>
            <person name="Cuomo C.A."/>
            <person name="de Jong P.J."/>
            <person name="DeCaprio D."/>
            <person name="Dewar K."/>
            <person name="FitzGerald M."/>
            <person name="Gilbert J."/>
            <person name="Gibson R."/>
            <person name="Gnerre S."/>
            <person name="Goldstein S."/>
            <person name="Grafham D.V."/>
            <person name="Grocock R."/>
            <person name="Hafez N."/>
            <person name="Hagopian D.S."/>
            <person name="Hart E."/>
            <person name="Norman C.H."/>
            <person name="Humphray S."/>
            <person name="Jaffe D.B."/>
            <person name="Jones M."/>
            <person name="Kamal M."/>
            <person name="Khodiyar V.K."/>
            <person name="LaButti K."/>
            <person name="Laird G."/>
            <person name="Lehoczky J."/>
            <person name="Liu X."/>
            <person name="Lokyitsang T."/>
            <person name="Loveland J."/>
            <person name="Lui A."/>
            <person name="Macdonald P."/>
            <person name="Major J.E."/>
            <person name="Matthews L."/>
            <person name="Mauceli E."/>
            <person name="McCarroll S.A."/>
            <person name="Mihalev A.H."/>
            <person name="Mudge J."/>
            <person name="Nguyen C."/>
            <person name="Nicol R."/>
            <person name="O'Leary S.B."/>
            <person name="Osoegawa K."/>
            <person name="Schwartz D.C."/>
            <person name="Shaw-Smith C."/>
            <person name="Stankiewicz P."/>
            <person name="Steward C."/>
            <person name="Swarbreck D."/>
            <person name="Venkataraman V."/>
            <person name="Whittaker C.A."/>
            <person name="Yang X."/>
            <person name="Zimmer A.R."/>
            <person name="Bradley A."/>
            <person name="Hubbard T."/>
            <person name="Birren B.W."/>
            <person name="Rogers J."/>
            <person name="Lander E.S."/>
            <person name="Nusbaum C."/>
        </authorList>
    </citation>
    <scope>NUCLEOTIDE SEQUENCE [LARGE SCALE GENOMIC DNA]</scope>
</reference>
<reference key="6">
    <citation type="journal article" date="2004" name="Genome Res.">
        <title>The status, quality, and expansion of the NIH full-length cDNA project: the Mammalian Gene Collection (MGC).</title>
        <authorList>
            <consortium name="The MGC Project Team"/>
        </authorList>
    </citation>
    <scope>NUCLEOTIDE SEQUENCE [LARGE SCALE MRNA] (ISOFORMS ALPHA-1 AND ALPHA-2)</scope>
    <source>
        <tissue>Blood</tissue>
        <tissue>Brain</tissue>
    </source>
</reference>
<reference key="7">
    <citation type="journal article" date="1990" name="Nucleic Acids Res.">
        <title>Characterization of a functional promoter for the human retinoic acid receptor-alpha (hRAR-alpha).</title>
        <authorList>
            <person name="Brand N.J."/>
            <person name="Petkovich M."/>
            <person name="Chambon P."/>
        </authorList>
    </citation>
    <scope>NUCLEOTIDE SEQUENCE [GENOMIC DNA / MRNA] OF 1-80 (ISOFORM ALPHA-1)</scope>
</reference>
<reference key="8">
    <citation type="journal article" date="1987" name="Nature">
        <title>A human retinoic acid receptor which belongs to the family of nuclear receptors.</title>
        <authorList>
            <person name="Petkovich M."/>
            <person name="Brand N.J."/>
            <person name="Krust A."/>
            <person name="Chambon P."/>
        </authorList>
    </citation>
    <scope>NUCLEOTIDE SEQUENCE [MRNA] OF 31-462</scope>
</reference>
<reference key="9">
    <citation type="submission" date="1988-12" db="EMBL/GenBank/DDBJ databases">
        <authorList>
            <person name="Chambon P."/>
        </authorList>
    </citation>
    <scope>SEQUENCE REVISION</scope>
</reference>
<reference key="10">
    <citation type="journal article" date="1996" name="Blood">
        <title>The t(5;17) variant of acute promyelocytic leukemia expresses a nucleophosmin-retinoic acid receptor fusion.</title>
        <authorList>
            <person name="Redner R.L."/>
            <person name="Rush E.A."/>
            <person name="Faas S."/>
            <person name="Rudert W.A."/>
            <person name="Corey S.J."/>
        </authorList>
    </citation>
    <scope>NUCLEOTIDE SEQUENCE [MRNA] OF 61-462</scope>
    <scope>CHROMOSOMAL TRANSLOCATION WITH NPM</scope>
    <source>
        <tissue>Bone marrow</tissue>
    </source>
</reference>
<reference key="11">
    <citation type="submission" date="2000-06" db="EMBL/GenBank/DDBJ databases">
        <title>Homo sapiens retinoic acid receptor alpha (RAR-alpha) gene, promoter and 5' region of RAR-alpha 2 isoform.</title>
        <authorList>
            <person name="Chen A."/>
            <person name="Petrie K."/>
            <person name="Waxman S."/>
            <person name="Zelent A."/>
        </authorList>
    </citation>
    <scope>NUCLEOTIDE SEQUENCE [GENOMIC DNA] OF 1-54 (ISOFORM ALPHA-2)</scope>
</reference>
<reference key="12">
    <citation type="journal article" date="2003" name="Leuk. Lymphoma">
        <title>Cytogenetics, FISH and RT-PCR analysis of acute promyelocytic leukemia: structure of the fusion point in a case lacking classic t(15;17) translocation.</title>
        <authorList>
            <person name="Fujita K."/>
            <person name="Oba R."/>
            <person name="Harada H."/>
            <person name="Mori H."/>
            <person name="Niikura H."/>
            <person name="Isoyama K."/>
            <person name="Omine M."/>
        </authorList>
    </citation>
    <scope>NUCLEOTIDE SEQUENCE [MRNA] OF 61-68</scope>
    <scope>CHROMOSOMAL TRANSLOCATION WITH PML</scope>
</reference>
<reference key="13">
    <citation type="journal article" date="1997" name="Cell">
        <title>Nuclear receptor coactivator ACTR is a novel histone acetyltransferase and forms a multimeric activation complex with P/CAF and CBP/p300.</title>
        <authorList>
            <person name="Chen H."/>
            <person name="Lin R.J."/>
            <person name="Schiltz R.L."/>
            <person name="Chakravarti D."/>
            <person name="Nash A."/>
            <person name="Nagy L."/>
            <person name="Privalsky M.L."/>
            <person name="Nakatani Y."/>
            <person name="Evans R.M."/>
        </authorList>
    </citation>
    <scope>FUNCTION</scope>
    <scope>INTERACTION WITH NCOA3</scope>
</reference>
<reference key="14">
    <citation type="journal article" date="1999" name="J. Biol. Chem.">
        <title>A nuclear factor ASC-2, as a cancer-amplified transcriptional coactivator essential for ligand-dependent transactivation by nuclear receptors in vivo.</title>
        <authorList>
            <person name="Lee S.-K."/>
            <person name="Anzick S.L."/>
            <person name="Choi J.-E."/>
            <person name="Bubendorf L."/>
            <person name="Guan X.-Y."/>
            <person name="Jung Y.-K."/>
            <person name="Kallioniemi O.-P."/>
            <person name="Kononen J."/>
            <person name="Trent J.M."/>
            <person name="Azorsa D."/>
            <person name="Jhun B.-H."/>
            <person name="Cheong J.H."/>
            <person name="Lee Y.C."/>
            <person name="Meltzer P.S."/>
            <person name="Lee J.W."/>
        </authorList>
    </citation>
    <scope>INTERACTION WITH NCOA6</scope>
</reference>
<reference key="15">
    <citation type="journal article" date="2002" name="J. Biol. Chem.">
        <title>Identification of protein arginine methyltransferase 2 as a coactivator for estrogen receptor alpha.</title>
        <authorList>
            <person name="Qi C."/>
            <person name="Chang J."/>
            <person name="Zhu Y."/>
            <person name="Yeldandi A.V."/>
            <person name="Rao S.M."/>
            <person name="Zhu Y.-J."/>
        </authorList>
    </citation>
    <scope>INTERACTION WITH PRMT2</scope>
</reference>
<reference key="16">
    <citation type="journal article" date="2002" name="Mol. Cell. Biol.">
        <title>ERAP140, a conserved tissue-specific nuclear receptor coactivator.</title>
        <authorList>
            <person name="Shao W."/>
            <person name="Halachmi S."/>
            <person name="Brown M."/>
        </authorList>
    </citation>
    <scope>INTERACTION WITH NCOA7</scope>
</reference>
<reference key="17">
    <citation type="journal article" date="2004" name="Mol. Cell. Biol.">
        <title>Retinoid X receptor regulates Nur77/TR3-dependent apoptosis [corrected] by modulating its nuclear export and mitochondrial targeting.</title>
        <authorList>
            <person name="Cao X."/>
            <person name="Liu W."/>
            <person name="Lin F."/>
            <person name="Li H."/>
            <person name="Kolluri S.K."/>
            <person name="Lin B."/>
            <person name="Han Y.H."/>
            <person name="Dawson M.I."/>
            <person name="Zhang X.K."/>
        </authorList>
    </citation>
    <scope>INTERACTION WITH RXRA</scope>
</reference>
<reference key="18">
    <citation type="journal article" date="2005" name="Biochem. Biophys. Res. Commun.">
        <title>Requirement of the coiled-coil domain of PML-RARalpha oncoprotein for localization, sumoylation, and inhibition of monocyte differentiation.</title>
        <authorList>
            <person name="Kim Y.E."/>
            <person name="Kim D.Y."/>
            <person name="Lee J.M."/>
            <person name="Kim S.T."/>
            <person name="Han T.H."/>
            <person name="Ahn J.H."/>
        </authorList>
    </citation>
    <scope>INTERACTION OF THE PML-RARALPHA ONCOPROTEIN WITH UBE2I</scope>
    <scope>SUMOYLATION</scope>
</reference>
<reference key="19">
    <citation type="journal article" date="2005" name="Cell">
        <title>The human tumor antigen PRAME is a dominant repressor of retinoic acid receptor signaling.</title>
        <authorList>
            <person name="Epping M.T."/>
            <person name="Wang L."/>
            <person name="Edel M.J."/>
            <person name="Carlee L."/>
            <person name="Hernandez M."/>
            <person name="Bernards R."/>
        </authorList>
    </citation>
    <scope>INTERACTION WITH PRAME</scope>
</reference>
<reference key="20">
    <citation type="journal article" date="2006" name="Biochem. J.">
        <title>Akt phosphorylates and suppresses the transactivation of retinoic acid receptor alpha.</title>
        <authorList>
            <person name="Srinivas H."/>
            <person name="Xia D."/>
            <person name="Moore N.L."/>
            <person name="Uray I.P."/>
            <person name="Kim H."/>
            <person name="Ma L."/>
            <person name="Weigel N.L."/>
            <person name="Brown P.H."/>
            <person name="Kurie J.M."/>
        </authorList>
    </citation>
    <scope>PHOSPHORYLATION AT SER-96</scope>
    <scope>FUNCTION</scope>
    <scope>INTERACTION WITH AKT1</scope>
    <scope>MUTAGENESIS OF SER-95; SER-96; SER-154 AND SER-157</scope>
</reference>
<reference key="21">
    <citation type="journal article" date="2006" name="J. Biol. Chem.">
        <title>Additional sex comb-like 1 (ASXL1), in cooperation with SRC-1, acts as a ligand-dependent coactivator for retinoic acid receptor.</title>
        <authorList>
            <person name="Cho Y.S."/>
            <person name="Kim E.J."/>
            <person name="Park U.H."/>
            <person name="Sin H.S."/>
            <person name="Um S.J."/>
        </authorList>
    </citation>
    <scope>INTERACTION WITH ASXL1 AND NCOA1</scope>
    <scope>MUTAGENESIS OF 409-ILE-LEU-410; GLU-412; 413-MET-LEU-414 AND GLU-415</scope>
</reference>
<reference key="22">
    <citation type="journal article" date="2007" name="J. Cell. Biochem.">
        <title>RIF-1, a novel nuclear receptor corepressor that associates with the nuclear matrix.</title>
        <authorList>
            <person name="Li H.J."/>
            <person name="Haque Z.K."/>
            <person name="Chen A."/>
            <person name="Mendelsohn M."/>
        </authorList>
    </citation>
    <scope>INTERACTION WITH LRIF1</scope>
</reference>
<reference key="23">
    <citation type="journal article" date="2009" name="Endocrinology">
        <title>Small ubiquitin-like modifier-2 modification of retinoic acid receptor-alpha regulates its subcellular localization and transcriptional activity.</title>
        <authorList>
            <person name="Zhu L."/>
            <person name="Santos N.C."/>
            <person name="Kim K.H."/>
        </authorList>
    </citation>
    <scope>FUNCTION</scope>
    <scope>SUBCELLULAR LOCATION</scope>
    <scope>SUMOYLATION AT LYS-166; LYS-171 AND LYS-399</scope>
    <scope>MUTAGENESIS OF LYS-147; LYS-166; LYS-171 AND LYS-399</scope>
</reference>
<reference key="24">
    <citation type="journal article" date="2009" name="Mol. Cell. Biol.">
        <title>ZNF536, a novel zinc finger protein specifically expressed in the brain, negatively regulates neuron differentiation by repressing retinoic acid-induced gene transcription.</title>
        <authorList>
            <person name="Qin Z."/>
            <person name="Ren F."/>
            <person name="Xu X."/>
            <person name="Ren Y."/>
            <person name="Li H."/>
            <person name="Wang Y."/>
            <person name="Zhai Y."/>
            <person name="Chang Z."/>
        </authorList>
    </citation>
    <scope>FUNCTION</scope>
    <scope>DNA-BINDING</scope>
    <scope>INDUCTION BY RETINOIC ACID</scope>
</reference>
<reference key="25">
    <citation type="journal article" date="2009" name="Nature">
        <title>GlcNAcylation of a histone methyltransferase in retinoic-acid-induced granulopoiesis.</title>
        <authorList>
            <person name="Fujiki R."/>
            <person name="Chikanishi T."/>
            <person name="Hashiba W."/>
            <person name="Ito H."/>
            <person name="Takada I."/>
            <person name="Roeder R.G."/>
            <person name="Kitagawa H."/>
            <person name="Kato S."/>
        </authorList>
    </citation>
    <scope>CAUTION</scope>
</reference>
<reference key="26">
    <citation type="journal article" date="2010" name="BMC Mol. Biol.">
        <title>The transforming acidic coiled coil (TACC1) protein modulates the transcriptional activity of the nuclear receptors TR and RAR.</title>
        <authorList>
            <person name="Guyot R."/>
            <person name="Vincent S."/>
            <person name="Bertin J."/>
            <person name="Samarut J."/>
            <person name="Ravel-Chapuis P."/>
        </authorList>
    </citation>
    <scope>RETRACTED PAPER</scope>
</reference>
<reference key="27">
    <citation type="journal article" date="2014" name="Nature">
        <title>Retraction: GlcNAcylation of a histone methyltransferase in retinoic-acid-induced granulopoiesis.</title>
        <authorList>
            <person name="Fujiki R."/>
            <person name="Chikanishi T."/>
            <person name="Hashiba W."/>
            <person name="Ito H."/>
            <person name="Takada I."/>
            <person name="Roeder R.G."/>
            <person name="Kitagawa H."/>
            <person name="Kato S."/>
        </authorList>
    </citation>
    <scope>RETRACTION NOTICE OF PUBMED:20078863</scope>
</reference>
<reference key="28">
    <citation type="journal article" date="2010" name="Endocrinology">
        <title>Activity of retinoic acid receptor-alpha is directly regulated at its protein kinase A sites in response to follicle-stimulating hormone signaling.</title>
        <authorList>
            <person name="Santos N.C."/>
            <person name="Kim K.H."/>
        </authorList>
    </citation>
    <scope>PHOSPHORYLATION AT SER-219 AND SER-369</scope>
    <scope>INTERACTION WITH RXRA AND PRKAR1A</scope>
    <scope>FUNCTION</scope>
    <scope>MUTAGENESIS OF SER-219 AND SER-369</scope>
</reference>
<reference key="29">
    <citation type="journal article" date="2012" name="J. Biol. Chem.">
        <title>Familial focal segmental glomerulosclerosis (FSGS)-linked alpha-actinin 4 (ACTN4) protein mutants lose ability to activate transcription by nuclear hormone receptors.</title>
        <authorList>
            <person name="Khurana S."/>
            <person name="Chakraborty S."/>
            <person name="Lam M."/>
            <person name="Liu Y."/>
            <person name="Su Y.T."/>
            <person name="Zhao X."/>
            <person name="Saleem M.A."/>
            <person name="Mathieson P.W."/>
            <person name="Bruggeman L.A."/>
            <person name="Kao H.Y."/>
        </authorList>
    </citation>
    <scope>INTERACTION WITH ACTN4</scope>
</reference>
<reference key="30">
    <citation type="journal article" date="2015" name="Brain">
        <title>Retinoid X receptor activation reverses age-related deficiencies in myelin debris phagocytosis and remyelination.</title>
        <authorList>
            <person name="Natrajan M.S."/>
            <person name="de la Fuente A.G."/>
            <person name="Crawford A.H."/>
            <person name="Linehan E."/>
            <person name="Nunez V."/>
            <person name="Johnson K.R."/>
            <person name="Wu T."/>
            <person name="Fitzgerald D.C."/>
            <person name="Ricote M."/>
            <person name="Bielekova B."/>
            <person name="Franklin R.J."/>
        </authorList>
    </citation>
    <scope>TISSUE SPECIFICITY</scope>
    <scope>REPRESSION BY AGING</scope>
</reference>
<reference key="31">
    <citation type="journal article" date="2017" name="Proc. Natl. Acad. Sci. U.S.A.">
        <title>MicroRNA-10a is crucial for endothelial response to different flow patterns via interaction of retinoid acid receptors and histone deacetylases.</title>
        <authorList>
            <person name="Lee D.Y."/>
            <person name="Lin T.E."/>
            <person name="Lee C.I."/>
            <person name="Zhou J."/>
            <person name="Huang Y.H."/>
            <person name="Lee P.L."/>
            <person name="Shih Y.T."/>
            <person name="Chien S."/>
            <person name="Chiu J.J."/>
        </authorList>
    </citation>
    <scope>FUNCTION</scope>
    <scope>INTERACTION WITH RXRA; RXRG; HDAC3; HDAC5 AND HDAC7</scope>
    <scope>SUBCELLULAR LOCATION</scope>
    <scope>INDUCTION BY PULSATILE SHEAR STRESS</scope>
    <scope>ACETYLATION</scope>
</reference>
<reference key="32">
    <citation type="journal article" date="2019" name="J. Steroid Biochem. Mol. Biol.">
        <title>Nuclear hormone receptors: Ancient 9aaTAD and evolutionally gained NCoA activation pathways.</title>
        <authorList>
            <person name="Piskacek M."/>
            <person name="Havelka M."/>
            <person name="Jendruchova K."/>
            <person name="Knight A."/>
        </authorList>
    </citation>
    <scope>9AATAD MOTIF</scope>
</reference>
<reference key="33">
    <citation type="journal article" date="2023" name="Mol. Cell">
        <title>UBR5 forms ligand-dependent complexes on chromatin to regulate nuclear hormone receptor stability.</title>
        <authorList>
            <person name="Tsai J.M."/>
            <person name="Aguirre J.D."/>
            <person name="Li Y.D."/>
            <person name="Brown J."/>
            <person name="Focht V."/>
            <person name="Kater L."/>
            <person name="Kempf G."/>
            <person name="Sandoval B."/>
            <person name="Schmitt S."/>
            <person name="Rutter J.C."/>
            <person name="Galli P."/>
            <person name="Sandate C.R."/>
            <person name="Cutler J.A."/>
            <person name="Zou C."/>
            <person name="Donovan K.A."/>
            <person name="Lumpkin R.J."/>
            <person name="Cavadini S."/>
            <person name="Park P.M.C."/>
            <person name="Sievers Q."/>
            <person name="Hatton C."/>
            <person name="Ener E."/>
            <person name="Regalado B.D."/>
            <person name="Sperling M.T."/>
            <person name="Slabicki M."/>
            <person name="Kim J."/>
            <person name="Zon R."/>
            <person name="Zhang Z."/>
            <person name="Miller P.G."/>
            <person name="Belizaire R."/>
            <person name="Sperling A.S."/>
            <person name="Fischer E.S."/>
            <person name="Irizarry R."/>
            <person name="Armstrong S.A."/>
            <person name="Thomae N.H."/>
            <person name="Ebert B.L."/>
        </authorList>
    </citation>
    <scope>FUNCTION</scope>
    <scope>UBIQUITINATION</scope>
    <scope>MUTAGENESIS OF VAL-240; ILE-254 AND ILE-258</scope>
</reference>
<reference key="34">
    <citation type="journal article" date="2000" name="EMBO J.">
        <title>Structure of the RXR-RAR DNA-binding complex on the retinoic acid response element DR1.</title>
        <authorList>
            <person name="Rastinejad F."/>
            <person name="Wagner T."/>
            <person name="Zhao Q."/>
            <person name="Khorasanizadeh S."/>
        </authorList>
    </citation>
    <scope>X-RAY CRYSTALLOGRAPHY (1.7 ANGSTROMS) OF 82-167 IN COMPLEX WITH RXRA AND DNA</scope>
</reference>
<reference key="35">
    <citation type="journal article" date="2000" name="Mol. Cell">
        <title>Crystal structure of a heterodimeric complex of RAR and RXR ligand-binding domains.</title>
        <authorList>
            <person name="Bourguet W."/>
            <person name="Vivat V."/>
            <person name="Wurtz J.M."/>
            <person name="Chambon P."/>
            <person name="Gronemeyer H."/>
            <person name="Moras D."/>
        </authorList>
    </citation>
    <scope>X-RAY CRYSTALLOGRAPHY (2.5 ANGSTROMS) OF 182-416 IN COMPLEX WITH M.MUSCULUS RXRA</scope>
</reference>
<reference key="36">
    <citation type="journal article" date="2010" name="Nat. Struct. Mol. Biol.">
        <title>A unique secondary-structure switch controls constitutive gene repression by retinoic acid receptor.</title>
        <authorList>
            <person name="le Maire A."/>
            <person name="Teyssier C."/>
            <person name="Erb C."/>
            <person name="Grimaldi M."/>
            <person name="Alvarez S."/>
            <person name="de Lera A.R."/>
            <person name="Balaguer P."/>
            <person name="Gronemeyer H."/>
            <person name="Royer C.A."/>
            <person name="Germain P."/>
            <person name="Bourguet W."/>
        </authorList>
    </citation>
    <scope>X-RAY CRYSTALLOGRAPHY (1.8 ANGSTROMS) OF 176-421 IN COMPLEXES WITH AGONIST AM580 AND NCOA1 AND WITH INVERSE AGONIST BMS493 AND NCOR1</scope>
    <scope>INTERACTION WITH NCOR1 AND NCOR2</scope>
    <scope>MUTAGENESIS OF ILE-396</scope>
</reference>
<reference evidence="38" key="37">
    <citation type="journal article" date="2010" name="PLoS ONE">
        <title>The 'phantom effect' of the rexinoid LG100754: structural and functional insights.</title>
        <authorList>
            <person name="Sato Y."/>
            <person name="Ramalanjaona N."/>
            <person name="Huet T."/>
            <person name="Potier N."/>
            <person name="Osz J."/>
            <person name="Antony P."/>
            <person name="Peluso-Iltis C."/>
            <person name="Poussin-Courmontagne P."/>
            <person name="Ennifar E."/>
            <person name="Mely Y."/>
            <person name="Dejaegere A."/>
            <person name="Moras D."/>
            <person name="Rochel N."/>
        </authorList>
    </citation>
    <scope>X-RAY CRYSTALLOGRAPHY (2.75 ANGSTROMS) OF 153-421 IN COMPLEX WITH NCOA2; MOUSE RXRA AND ALL-TRANS-RETINOATE</scope>
    <scope>FUNCTION</scope>
    <scope>INTERACTION WITH RXRA</scope>
</reference>
<keyword id="KW-0002">3D-structure</keyword>
<keyword id="KW-0025">Alternative splicing</keyword>
<keyword id="KW-0160">Chromosomal rearrangement</keyword>
<keyword id="KW-0963">Cytoplasm</keyword>
<keyword id="KW-0238">DNA-binding</keyword>
<keyword id="KW-1017">Isopeptide bond</keyword>
<keyword id="KW-0479">Metal-binding</keyword>
<keyword id="KW-0539">Nucleus</keyword>
<keyword id="KW-0597">Phosphoprotein</keyword>
<keyword id="KW-1267">Proteomics identification</keyword>
<keyword id="KW-0656">Proto-oncogene</keyword>
<keyword id="KW-0675">Receptor</keyword>
<keyword id="KW-1185">Reference proteome</keyword>
<keyword id="KW-0804">Transcription</keyword>
<keyword id="KW-0805">Transcription regulation</keyword>
<keyword id="KW-0832">Ubl conjugation</keyword>
<keyword id="KW-0862">Zinc</keyword>
<keyword id="KW-0863">Zinc-finger</keyword>